<dbReference type="EC" id="1.14.11.80" evidence="16 19"/>
<dbReference type="EMBL" id="BX640738">
    <property type="protein sequence ID" value="CAE45851.1"/>
    <property type="molecule type" value="mRNA"/>
</dbReference>
<dbReference type="EMBL" id="AC004069">
    <property type="status" value="NOT_ANNOTATED_CDS"/>
    <property type="molecule type" value="Genomic_DNA"/>
</dbReference>
<dbReference type="EMBL" id="AC026029">
    <property type="status" value="NOT_ANNOTATED_CDS"/>
    <property type="molecule type" value="Genomic_DNA"/>
</dbReference>
<dbReference type="EMBL" id="AK000039">
    <property type="protein sequence ID" value="BAA90898.1"/>
    <property type="status" value="ALT_SEQ"/>
    <property type="molecule type" value="mRNA"/>
</dbReference>
<dbReference type="EMBL" id="AK027819">
    <property type="protein sequence ID" value="BAB55391.1"/>
    <property type="status" value="ALT_INIT"/>
    <property type="molecule type" value="mRNA"/>
</dbReference>
<dbReference type="EMBL" id="AB075496">
    <property type="protein sequence ID" value="BAE45750.1"/>
    <property type="molecule type" value="mRNA"/>
</dbReference>
<dbReference type="EMBL" id="BC110509">
    <property type="protein sequence ID" value="AAI10510.1"/>
    <property type="molecule type" value="mRNA"/>
</dbReference>
<dbReference type="EMBL" id="BC110510">
    <property type="protein sequence ID" value="AAI10511.2"/>
    <property type="molecule type" value="mRNA"/>
</dbReference>
<dbReference type="EMBL" id="AB046766">
    <property type="protein sequence ID" value="BAB13372.1"/>
    <property type="molecule type" value="mRNA"/>
</dbReference>
<dbReference type="CCDS" id="CCDS3666.1">
    <molecule id="Q6N021-2"/>
</dbReference>
<dbReference type="CCDS" id="CCDS47120.1">
    <molecule id="Q6N021-1"/>
</dbReference>
<dbReference type="RefSeq" id="NP_001120680.1">
    <molecule id="Q6N021-1"/>
    <property type="nucleotide sequence ID" value="NM_001127208.3"/>
</dbReference>
<dbReference type="RefSeq" id="NP_060098.3">
    <molecule id="Q6N021-2"/>
    <property type="nucleotide sequence ID" value="NM_017628.4"/>
</dbReference>
<dbReference type="RefSeq" id="XP_005263139.1">
    <molecule id="Q6N021-1"/>
    <property type="nucleotide sequence ID" value="XM_005263082.4"/>
</dbReference>
<dbReference type="RefSeq" id="XP_024309870.1">
    <molecule id="Q6N021-1"/>
    <property type="nucleotide sequence ID" value="XM_024454102.2"/>
</dbReference>
<dbReference type="RefSeq" id="XP_024309871.1">
    <molecule id="Q6N021-1"/>
    <property type="nucleotide sequence ID" value="XM_024454103.2"/>
</dbReference>
<dbReference type="RefSeq" id="XP_047271797.1">
    <molecule id="Q6N021-3"/>
    <property type="nucleotide sequence ID" value="XM_047415841.1"/>
</dbReference>
<dbReference type="RefSeq" id="XP_054206253.1">
    <molecule id="Q6N021-3"/>
    <property type="nucleotide sequence ID" value="XM_054350278.1"/>
</dbReference>
<dbReference type="PDB" id="4NM6">
    <property type="method" value="X-ray"/>
    <property type="resolution" value="2.03 A"/>
    <property type="chains" value="A=1129-1480, A=1844-1936"/>
</dbReference>
<dbReference type="PDB" id="5D9Y">
    <property type="method" value="X-ray"/>
    <property type="resolution" value="1.97 A"/>
    <property type="chains" value="A=1129-1480, A=1844-1936"/>
</dbReference>
<dbReference type="PDB" id="5DEU">
    <property type="method" value="X-ray"/>
    <property type="resolution" value="1.80 A"/>
    <property type="chains" value="A=1129-1480, A=1844-1935"/>
</dbReference>
<dbReference type="PDB" id="7NE3">
    <property type="method" value="X-ray"/>
    <property type="resolution" value="2.26 A"/>
    <property type="chains" value="A=1129-1480"/>
</dbReference>
<dbReference type="PDB" id="7NE6">
    <property type="method" value="X-ray"/>
    <property type="resolution" value="2.30 A"/>
    <property type="chains" value="A=1129-1480"/>
</dbReference>
<dbReference type="PDBsum" id="4NM6"/>
<dbReference type="PDBsum" id="5D9Y"/>
<dbReference type="PDBsum" id="5DEU"/>
<dbReference type="PDBsum" id="7NE3"/>
<dbReference type="PDBsum" id="7NE6"/>
<dbReference type="SMR" id="Q6N021"/>
<dbReference type="BioGRID" id="120151">
    <property type="interactions" value="140"/>
</dbReference>
<dbReference type="CORUM" id="Q6N021"/>
<dbReference type="FunCoup" id="Q6N021">
    <property type="interactions" value="1878"/>
</dbReference>
<dbReference type="IntAct" id="Q6N021">
    <property type="interactions" value="51"/>
</dbReference>
<dbReference type="MINT" id="Q6N021"/>
<dbReference type="STRING" id="9606.ENSP00000442788"/>
<dbReference type="BindingDB" id="Q6N021"/>
<dbReference type="ChEMBL" id="CHEMBL4523344"/>
<dbReference type="GlyGen" id="Q6N021">
    <property type="glycosylation" value="10 sites, 1 O-linked glycan (9 sites)"/>
</dbReference>
<dbReference type="iPTMnet" id="Q6N021"/>
<dbReference type="PhosphoSitePlus" id="Q6N021"/>
<dbReference type="BioMuta" id="TET2"/>
<dbReference type="DMDM" id="239938839"/>
<dbReference type="jPOST" id="Q6N021"/>
<dbReference type="MassIVE" id="Q6N021"/>
<dbReference type="PaxDb" id="9606-ENSP00000442788"/>
<dbReference type="PeptideAtlas" id="Q6N021"/>
<dbReference type="ProteomicsDB" id="66598">
    <molecule id="Q6N021-1"/>
</dbReference>
<dbReference type="ProteomicsDB" id="66599">
    <molecule id="Q6N021-2"/>
</dbReference>
<dbReference type="ProteomicsDB" id="66600">
    <molecule id="Q6N021-3"/>
</dbReference>
<dbReference type="Pumba" id="Q6N021"/>
<dbReference type="Antibodypedia" id="45118">
    <property type="antibodies" value="451 antibodies from 37 providers"/>
</dbReference>
<dbReference type="DNASU" id="54790"/>
<dbReference type="Ensembl" id="ENST00000265149.9">
    <molecule id="Q6N021-3"/>
    <property type="protein sequence ID" value="ENSP00000265149.5"/>
    <property type="gene ID" value="ENSG00000168769.14"/>
</dbReference>
<dbReference type="Ensembl" id="ENST00000305737.6">
    <molecule id="Q6N021-2"/>
    <property type="protein sequence ID" value="ENSP00000306705.2"/>
    <property type="gene ID" value="ENSG00000168769.14"/>
</dbReference>
<dbReference type="Ensembl" id="ENST00000380013.9">
    <molecule id="Q6N021-1"/>
    <property type="protein sequence ID" value="ENSP00000369351.4"/>
    <property type="gene ID" value="ENSG00000168769.14"/>
</dbReference>
<dbReference type="Ensembl" id="ENST00000540549.5">
    <molecule id="Q6N021-1"/>
    <property type="protein sequence ID" value="ENSP00000442788.1"/>
    <property type="gene ID" value="ENSG00000168769.14"/>
</dbReference>
<dbReference type="GeneID" id="54790"/>
<dbReference type="KEGG" id="hsa:54790"/>
<dbReference type="MANE-Select" id="ENST00000380013.9">
    <property type="protein sequence ID" value="ENSP00000369351.4"/>
    <property type="RefSeq nucleotide sequence ID" value="NM_001127208.3"/>
    <property type="RefSeq protein sequence ID" value="NP_001120680.1"/>
</dbReference>
<dbReference type="UCSC" id="uc003hxj.3">
    <molecule id="Q6N021-1"/>
    <property type="organism name" value="human"/>
</dbReference>
<dbReference type="AGR" id="HGNC:25941"/>
<dbReference type="CTD" id="54790"/>
<dbReference type="DisGeNET" id="54790"/>
<dbReference type="GeneCards" id="TET2"/>
<dbReference type="HGNC" id="HGNC:25941">
    <property type="gene designation" value="TET2"/>
</dbReference>
<dbReference type="HPA" id="ENSG00000168769">
    <property type="expression patterns" value="Tissue enhanced (bone)"/>
</dbReference>
<dbReference type="MalaCards" id="TET2"/>
<dbReference type="MIM" id="263300">
    <property type="type" value="phenotype"/>
</dbReference>
<dbReference type="MIM" id="612839">
    <property type="type" value="gene"/>
</dbReference>
<dbReference type="MIM" id="614286">
    <property type="type" value="phenotype"/>
</dbReference>
<dbReference type="MIM" id="619126">
    <property type="type" value="phenotype"/>
</dbReference>
<dbReference type="neXtProt" id="NX_Q6N021"/>
<dbReference type="OpenTargets" id="ENSG00000168769"/>
<dbReference type="Orphanet" id="75564">
    <property type="disease" value="Acquired idiopathic sideroblastic anemia"/>
</dbReference>
<dbReference type="Orphanet" id="86845">
    <property type="disease" value="Acute myeloid leukaemia with myelodysplasia-related features"/>
</dbReference>
<dbReference type="Orphanet" id="98850">
    <property type="disease" value="Aggressive systemic mastocytosis"/>
</dbReference>
<dbReference type="Orphanet" id="664729">
    <property type="disease" value="EBV-induced lymphoproliferative disease due to TET2 deficiency"/>
</dbReference>
<dbReference type="Orphanet" id="3318">
    <property type="disease" value="Essential thrombocythemia"/>
</dbReference>
<dbReference type="Orphanet" id="100019">
    <property type="disease" value="Myelodysplastic neoplasm with increased blasts type 1"/>
</dbReference>
<dbReference type="Orphanet" id="100020">
    <property type="disease" value="Myelodysplastic neoplasm with increased blasts type 2"/>
</dbReference>
<dbReference type="Orphanet" id="98826">
    <property type="disease" value="Myelodysplastic neoplasm with low blasts"/>
</dbReference>
<dbReference type="Orphanet" id="824">
    <property type="disease" value="Primary myelofibrosis"/>
</dbReference>
<dbReference type="Orphanet" id="98849">
    <property type="disease" value="Systemic mastocytosis with associated hematologic neoplasm"/>
</dbReference>
<dbReference type="PharmGKB" id="PA162405634"/>
<dbReference type="VEuPathDB" id="HostDB:ENSG00000168769"/>
<dbReference type="eggNOG" id="ENOG502QURD">
    <property type="taxonomic scope" value="Eukaryota"/>
</dbReference>
<dbReference type="GeneTree" id="ENSGT00940000160003"/>
<dbReference type="HOGENOM" id="CLU_274735_0_0_1"/>
<dbReference type="InParanoid" id="Q6N021"/>
<dbReference type="OMA" id="HYSKPAW"/>
<dbReference type="OrthoDB" id="8854879at2759"/>
<dbReference type="PAN-GO" id="Q6N021">
    <property type="GO annotations" value="6 GO annotations based on evolutionary models"/>
</dbReference>
<dbReference type="PhylomeDB" id="Q6N021"/>
<dbReference type="TreeFam" id="TF337563"/>
<dbReference type="PathwayCommons" id="Q6N021"/>
<dbReference type="Reactome" id="R-HSA-5221030">
    <property type="pathway name" value="TET1,2,3 and TDG demethylate DNA"/>
</dbReference>
<dbReference type="Reactome" id="R-HSA-9827857">
    <property type="pathway name" value="Specification of primordial germ cells"/>
</dbReference>
<dbReference type="SignaLink" id="Q6N021"/>
<dbReference type="SIGNOR" id="Q6N021"/>
<dbReference type="BioGRID-ORCS" id="54790">
    <property type="hits" value="8 hits in 1185 CRISPR screens"/>
</dbReference>
<dbReference type="ChiTaRS" id="TET2">
    <property type="organism name" value="human"/>
</dbReference>
<dbReference type="EvolutionaryTrace" id="Q6N021"/>
<dbReference type="GenomeRNAi" id="54790"/>
<dbReference type="Pharos" id="Q6N021">
    <property type="development level" value="Tchem"/>
</dbReference>
<dbReference type="PRO" id="PR:Q6N021"/>
<dbReference type="Proteomes" id="UP000005640">
    <property type="component" value="Chromosome 4"/>
</dbReference>
<dbReference type="RNAct" id="Q6N021">
    <property type="molecule type" value="protein"/>
</dbReference>
<dbReference type="Bgee" id="ENSG00000168769">
    <property type="expression patterns" value="Expressed in palpebral conjunctiva and 184 other cell types or tissues"/>
</dbReference>
<dbReference type="ExpressionAtlas" id="Q6N021">
    <property type="expression patterns" value="baseline and differential"/>
</dbReference>
<dbReference type="GO" id="GO:0005694">
    <property type="term" value="C:chromosome"/>
    <property type="evidence" value="ECO:0007669"/>
    <property type="project" value="UniProtKB-SubCell"/>
</dbReference>
<dbReference type="GO" id="GO:0005654">
    <property type="term" value="C:nucleoplasm"/>
    <property type="evidence" value="ECO:0000304"/>
    <property type="project" value="Reactome"/>
</dbReference>
<dbReference type="GO" id="GO:0005634">
    <property type="term" value="C:nucleus"/>
    <property type="evidence" value="ECO:0000318"/>
    <property type="project" value="GO_Central"/>
</dbReference>
<dbReference type="GO" id="GO:0070579">
    <property type="term" value="F:5-methylcytosine dioxygenase activity"/>
    <property type="evidence" value="ECO:0000314"/>
    <property type="project" value="UniProtKB"/>
</dbReference>
<dbReference type="GO" id="GO:0003677">
    <property type="term" value="F:DNA binding"/>
    <property type="evidence" value="ECO:0007669"/>
    <property type="project" value="UniProtKB-KW"/>
</dbReference>
<dbReference type="GO" id="GO:0008198">
    <property type="term" value="F:ferrous iron binding"/>
    <property type="evidence" value="ECO:0000314"/>
    <property type="project" value="UniProtKB"/>
</dbReference>
<dbReference type="GO" id="GO:0008270">
    <property type="term" value="F:zinc ion binding"/>
    <property type="evidence" value="ECO:0000314"/>
    <property type="project" value="UniProtKB"/>
</dbReference>
<dbReference type="GO" id="GO:0141167">
    <property type="term" value="P:chromosomal 5-methylcytosine DNA demethylation, oxidation pathway"/>
    <property type="evidence" value="ECO:0007669"/>
    <property type="project" value="InterPro"/>
</dbReference>
<dbReference type="GO" id="GO:0002521">
    <property type="term" value="P:leukocyte differentiation"/>
    <property type="evidence" value="ECO:0000315"/>
    <property type="project" value="UniProtKB"/>
</dbReference>
<dbReference type="GO" id="GO:0030099">
    <property type="term" value="P:myeloid cell differentiation"/>
    <property type="evidence" value="ECO:0000315"/>
    <property type="project" value="UniProtKB"/>
</dbReference>
<dbReference type="GO" id="GO:0044029">
    <property type="term" value="P:positive regulation of gene expression via chromosomal CpG island demethylation"/>
    <property type="evidence" value="ECO:0000314"/>
    <property type="project" value="ARUK-UCL"/>
</dbReference>
<dbReference type="GO" id="GO:0045944">
    <property type="term" value="P:positive regulation of transcription by RNA polymerase II"/>
    <property type="evidence" value="ECO:0000315"/>
    <property type="project" value="UniProtKB"/>
</dbReference>
<dbReference type="GO" id="GO:0006493">
    <property type="term" value="P:protein O-linked glycosylation"/>
    <property type="evidence" value="ECO:0000314"/>
    <property type="project" value="UniProtKB"/>
</dbReference>
<dbReference type="CDD" id="cd18896">
    <property type="entry name" value="TET2"/>
    <property type="match status" value="1"/>
</dbReference>
<dbReference type="InterPro" id="IPR024779">
    <property type="entry name" value="2OGFeDO_JBP1/TET_oxygenase_dom"/>
</dbReference>
<dbReference type="InterPro" id="IPR040175">
    <property type="entry name" value="TET1/2/3"/>
</dbReference>
<dbReference type="InterPro" id="IPR046942">
    <property type="entry name" value="TET_oxygenase"/>
</dbReference>
<dbReference type="PANTHER" id="PTHR23358">
    <property type="entry name" value="METHYLCYTOSINE DIOXYGENASE TET"/>
    <property type="match status" value="1"/>
</dbReference>
<dbReference type="PANTHER" id="PTHR23358:SF3">
    <property type="entry name" value="METHYLCYTOSINE DIOXYGENASE TET2"/>
    <property type="match status" value="1"/>
</dbReference>
<dbReference type="Pfam" id="PF12851">
    <property type="entry name" value="Tet_JBP"/>
    <property type="match status" value="1"/>
</dbReference>
<dbReference type="SMART" id="SM01333">
    <property type="entry name" value="Tet_JBP"/>
    <property type="match status" value="1"/>
</dbReference>
<name>TET2_HUMAN</name>
<feature type="chain" id="PRO_0000324588" description="Methylcytosine dioxygenase TET2">
    <location>
        <begin position="1"/>
        <end position="2002"/>
    </location>
</feature>
<feature type="region of interest" description="Disordered" evidence="2">
    <location>
        <begin position="1"/>
        <end position="22"/>
    </location>
</feature>
<feature type="region of interest" description="Disordered" evidence="2">
    <location>
        <begin position="113"/>
        <end position="154"/>
    </location>
</feature>
<feature type="region of interest" description="Disordered" evidence="2">
    <location>
        <begin position="266"/>
        <end position="287"/>
    </location>
</feature>
<feature type="region of interest" description="Disordered" evidence="2">
    <location>
        <begin position="349"/>
        <end position="368"/>
    </location>
</feature>
<feature type="region of interest" description="Disordered" evidence="2">
    <location>
        <begin position="390"/>
        <end position="488"/>
    </location>
</feature>
<feature type="region of interest" description="Disordered" evidence="2">
    <location>
        <begin position="703"/>
        <end position="748"/>
    </location>
</feature>
<feature type="region of interest" description="Disordered" evidence="2">
    <location>
        <begin position="930"/>
        <end position="949"/>
    </location>
</feature>
<feature type="region of interest" description="Disordered" evidence="2">
    <location>
        <begin position="1075"/>
        <end position="1095"/>
    </location>
</feature>
<feature type="region of interest" description="Interaction with DNA">
    <location>
        <begin position="1290"/>
        <end position="1303"/>
    </location>
</feature>
<feature type="region of interest" description="Disordered" evidence="2">
    <location>
        <begin position="1475"/>
        <end position="1507"/>
    </location>
</feature>
<feature type="region of interest" description="Disordered" evidence="2">
    <location>
        <begin position="1521"/>
        <end position="1587"/>
    </location>
</feature>
<feature type="region of interest" description="Disordered" evidence="2">
    <location>
        <begin position="1932"/>
        <end position="1961"/>
    </location>
</feature>
<feature type="compositionally biased region" description="Basic and acidic residues" evidence="2">
    <location>
        <begin position="1"/>
        <end position="11"/>
    </location>
</feature>
<feature type="compositionally biased region" description="Basic and acidic residues" evidence="2">
    <location>
        <begin position="113"/>
        <end position="124"/>
    </location>
</feature>
<feature type="compositionally biased region" description="Polar residues" evidence="2">
    <location>
        <begin position="126"/>
        <end position="143"/>
    </location>
</feature>
<feature type="compositionally biased region" description="Polar residues" evidence="2">
    <location>
        <begin position="267"/>
        <end position="283"/>
    </location>
</feature>
<feature type="compositionally biased region" description="Pro residues" evidence="2">
    <location>
        <begin position="397"/>
        <end position="416"/>
    </location>
</feature>
<feature type="compositionally biased region" description="Polar residues" evidence="2">
    <location>
        <begin position="479"/>
        <end position="488"/>
    </location>
</feature>
<feature type="compositionally biased region" description="Polar residues" evidence="2">
    <location>
        <begin position="703"/>
        <end position="718"/>
    </location>
</feature>
<feature type="compositionally biased region" description="Low complexity" evidence="2">
    <location>
        <begin position="731"/>
        <end position="748"/>
    </location>
</feature>
<feature type="compositionally biased region" description="Polar residues" evidence="2">
    <location>
        <begin position="935"/>
        <end position="944"/>
    </location>
</feature>
<feature type="compositionally biased region" description="Polar residues" evidence="2">
    <location>
        <begin position="1081"/>
        <end position="1095"/>
    </location>
</feature>
<feature type="compositionally biased region" description="Low complexity" evidence="2">
    <location>
        <begin position="1477"/>
        <end position="1487"/>
    </location>
</feature>
<feature type="compositionally biased region" description="Polar residues" evidence="2">
    <location>
        <begin position="1496"/>
        <end position="1507"/>
    </location>
</feature>
<feature type="compositionally biased region" description="Low complexity" evidence="2">
    <location>
        <begin position="1523"/>
        <end position="1532"/>
    </location>
</feature>
<feature type="compositionally biased region" description="Low complexity" evidence="2">
    <location>
        <begin position="1539"/>
        <end position="1551"/>
    </location>
</feature>
<feature type="compositionally biased region" description="Polar residues" evidence="2">
    <location>
        <begin position="1554"/>
        <end position="1568"/>
    </location>
</feature>
<feature type="compositionally biased region" description="Basic and acidic residues" evidence="2">
    <location>
        <begin position="1951"/>
        <end position="1960"/>
    </location>
</feature>
<feature type="binding site" evidence="16">
    <location>
        <position position="1133"/>
    </location>
    <ligand>
        <name>Zn(2+)</name>
        <dbReference type="ChEBI" id="CHEBI:29105"/>
        <label>1</label>
    </ligand>
</feature>
<feature type="binding site" evidence="16">
    <location>
        <position position="1135"/>
    </location>
    <ligand>
        <name>Zn(2+)</name>
        <dbReference type="ChEBI" id="CHEBI:29105"/>
        <label>1</label>
    </ligand>
</feature>
<feature type="binding site" evidence="16">
    <location>
        <position position="1193"/>
    </location>
    <ligand>
        <name>Zn(2+)</name>
        <dbReference type="ChEBI" id="CHEBI:29105"/>
        <label>2</label>
    </ligand>
</feature>
<feature type="binding site" evidence="16">
    <location>
        <position position="1219"/>
    </location>
    <ligand>
        <name>Zn(2+)</name>
        <dbReference type="ChEBI" id="CHEBI:29105"/>
        <label>1</label>
    </ligand>
</feature>
<feature type="binding site" evidence="16">
    <location>
        <position position="1221"/>
    </location>
    <ligand>
        <name>Zn(2+)</name>
        <dbReference type="ChEBI" id="CHEBI:29105"/>
        <label>1</label>
    </ligand>
</feature>
<feature type="binding site" evidence="16">
    <location>
        <position position="1261"/>
    </location>
    <ligand>
        <name>2-oxoglutarate</name>
        <dbReference type="ChEBI" id="CHEBI:16810"/>
    </ligand>
</feature>
<feature type="binding site" evidence="16">
    <location>
        <position position="1271"/>
    </location>
    <ligand>
        <name>Zn(2+)</name>
        <dbReference type="ChEBI" id="CHEBI:29105"/>
        <label>2</label>
    </ligand>
</feature>
<feature type="binding site" evidence="16">
    <location>
        <position position="1273"/>
    </location>
    <ligand>
        <name>Zn(2+)</name>
        <dbReference type="ChEBI" id="CHEBI:29105"/>
        <label>2</label>
    </ligand>
</feature>
<feature type="binding site" evidence="16">
    <location>
        <position position="1289"/>
    </location>
    <ligand>
        <name>Zn(2+)</name>
        <dbReference type="ChEBI" id="CHEBI:29105"/>
        <label>3</label>
    </ligand>
</feature>
<feature type="binding site" evidence="16">
    <location>
        <position position="1298"/>
    </location>
    <ligand>
        <name>Zn(2+)</name>
        <dbReference type="ChEBI" id="CHEBI:29105"/>
        <label>3</label>
    </ligand>
</feature>
<feature type="binding site" evidence="16">
    <location>
        <position position="1358"/>
    </location>
    <ligand>
        <name>Zn(2+)</name>
        <dbReference type="ChEBI" id="CHEBI:29105"/>
        <label>3</label>
    </ligand>
</feature>
<feature type="binding site" evidence="16">
    <location>
        <position position="1374"/>
    </location>
    <ligand>
        <name>2-oxoglutarate</name>
        <dbReference type="ChEBI" id="CHEBI:16810"/>
    </ligand>
</feature>
<feature type="binding site" evidence="16">
    <location>
        <position position="1380"/>
    </location>
    <ligand>
        <name>Zn(2+)</name>
        <dbReference type="ChEBI" id="CHEBI:29105"/>
        <label>2</label>
    </ligand>
</feature>
<feature type="binding site" evidence="16">
    <location>
        <position position="1382"/>
    </location>
    <ligand>
        <name>Fe cation</name>
        <dbReference type="ChEBI" id="CHEBI:24875"/>
        <note>catalytic</note>
    </ligand>
</feature>
<feature type="binding site" evidence="16">
    <location>
        <position position="1384"/>
    </location>
    <ligand>
        <name>Fe cation</name>
        <dbReference type="ChEBI" id="CHEBI:24875"/>
        <note>catalytic</note>
    </ligand>
</feature>
<feature type="binding site" evidence="16">
    <location>
        <position position="1387"/>
    </location>
    <ligand>
        <name>substrate</name>
    </ligand>
</feature>
<feature type="binding site" evidence="16">
    <location>
        <position position="1416"/>
    </location>
    <ligand>
        <name>2-oxoglutarate</name>
        <dbReference type="ChEBI" id="CHEBI:16810"/>
    </ligand>
</feature>
<feature type="binding site" evidence="16">
    <location>
        <position position="1881"/>
    </location>
    <ligand>
        <name>Fe cation</name>
        <dbReference type="ChEBI" id="CHEBI:24875"/>
        <note>catalytic</note>
    </ligand>
</feature>
<feature type="binding site" evidence="16">
    <location>
        <begin position="1896"/>
        <end position="1898"/>
    </location>
    <ligand>
        <name>2-oxoglutarate</name>
        <dbReference type="ChEBI" id="CHEBI:16810"/>
    </ligand>
</feature>
<feature type="binding site" evidence="16">
    <location>
        <begin position="1902"/>
        <end position="1904"/>
    </location>
    <ligand>
        <name>substrate</name>
    </ligand>
</feature>
<feature type="binding site" evidence="16">
    <location>
        <position position="1912"/>
    </location>
    <ligand>
        <name>Zn(2+)</name>
        <dbReference type="ChEBI" id="CHEBI:29105"/>
        <label>3</label>
    </ligand>
</feature>
<feature type="modified residue" description="Phosphoserine" evidence="1">
    <location>
        <position position="15"/>
    </location>
</feature>
<feature type="modified residue" description="Phosphoserine" evidence="28">
    <location>
        <position position="75"/>
    </location>
</feature>
<feature type="modified residue" description="Phosphoserine" evidence="27 28">
    <location>
        <position position="99"/>
    </location>
</feature>
<feature type="modified residue" description="Phosphoserine" evidence="27 28">
    <location>
        <position position="1107"/>
    </location>
</feature>
<feature type="modified residue" description="Phosphoserine" evidence="28">
    <location>
        <position position="1109"/>
    </location>
</feature>
<feature type="modified residue" description="Asymmetric dimethylarginine" evidence="29">
    <location>
        <position position="1682"/>
    </location>
</feature>
<feature type="cross-link" description="Glycyl lysine isopeptide (Lys-Gly) (interchain with G-Cter in ubiquitin)" evidence="18">
    <location>
        <position position="1299"/>
    </location>
</feature>
<feature type="splice variant" id="VSP_032282" description="In isoform 3." evidence="22">
    <original>EQIIEKDEGPFYTHLGAGPNVAAIREIMEERFGQKGKAIRIERVIYTGKEGKSSQGCP</original>
    <variation>GLDRRVKLLGLKESSILVKKAKVLRDVLLLSGWFAEAAVKRSYCVWCGSELATPVRLQ</variation>
    <location>
        <begin position="1137"/>
        <end position="1194"/>
    </location>
</feature>
<feature type="splice variant" id="VSP_032283" description="In isoform 2." evidence="23 24">
    <original>EQIIEKDEGPFYTHLGAGPNVAAIREIME</original>
    <variation>GKCQKCTETHGVYPELANLSSDMGFSFFF</variation>
    <location>
        <begin position="1137"/>
        <end position="1165"/>
    </location>
</feature>
<feature type="splice variant" id="VSP_032284" description="In isoform 2." evidence="23 24">
    <location>
        <begin position="1166"/>
        <end position="2002"/>
    </location>
</feature>
<feature type="splice variant" id="VSP_032285" description="In isoform 3." evidence="22">
    <location>
        <begin position="1195"/>
        <end position="2002"/>
    </location>
</feature>
<feature type="sequence variant" id="VAR_039841" description="In dbSNP:rs12498609." evidence="11">
    <original>P</original>
    <variation>R</variation>
    <location>
        <position position="29"/>
    </location>
</feature>
<feature type="sequence variant" id="VAR_058171" description="In dbSNP:rs111948941." evidence="9 11">
    <original>L</original>
    <variation>F</variation>
    <location>
        <position position="34"/>
    </location>
</feature>
<feature type="sequence variant" id="VAR_058130" description="In dbSNP:rs773565437." evidence="11">
    <original>R</original>
    <variation>H</variation>
    <location>
        <position position="123"/>
    </location>
</feature>
<feature type="sequence variant" id="VAR_058172" description="In a chronic myelomonocytic leukemia sample; somatic mutation; dbSNP:rs114619974." evidence="9">
    <original>S</original>
    <variation>N</variation>
    <location>
        <position position="145"/>
    </location>
</feature>
<feature type="sequence variant" id="VAR_058173" description="In dbSNP:rs146031219." evidence="9">
    <original>P</original>
    <variation>H</variation>
    <location>
        <position position="174"/>
    </location>
</feature>
<feature type="sequence variant" id="VAR_039842" description="In dbSNP:rs6843141." evidence="5 11">
    <original>V</original>
    <variation>M</variation>
    <location>
        <position position="218"/>
    </location>
</feature>
<feature type="sequence variant" id="VAR_058131" description="In chronic myelomonocytic leukemia and acute myeloid leukemia samples; dbSNP:rs569067880." evidence="8">
    <original>A</original>
    <variation>T</variation>
    <location>
        <position position="308"/>
    </location>
</feature>
<feature type="sequence variant" id="VAR_058174" description="In an acute myeloid leukemia sample; somatic mutation." evidence="9">
    <original>N</original>
    <variation>S</variation>
    <location>
        <position position="312"/>
    </location>
</feature>
<feature type="sequence variant" id="VAR_058132" description="In dbSNP:rs61744960." evidence="11">
    <original>G</original>
    <variation>D</variation>
    <location>
        <position position="355"/>
    </location>
</feature>
<feature type="sequence variant" id="VAR_039843" description="In dbSNP:rs17253672." evidence="11">
    <original>P</original>
    <variation>L</variation>
    <location>
        <position position="363"/>
    </location>
</feature>
<feature type="sequence variant" id="VAR_058133" description="In myelodysplastic/myeloproliferative disorders; a patient positive for mutation F-617 in JAK2." evidence="8">
    <original>P</original>
    <variation>L</variation>
    <location>
        <position position="399"/>
    </location>
</feature>
<feature type="sequence variant" id="VAR_058134" description="In dbSNP:rs201642693." evidence="11">
    <original>G</original>
    <variation>R</variation>
    <location>
        <position position="429"/>
    </location>
</feature>
<feature type="sequence variant" id="VAR_058175" description="In a chronic myelomonocytic leukemia sample; somatic mutation; dbSNP:rs376570662." evidence="9">
    <original>S</original>
    <variation>F</variation>
    <location>
        <position position="460"/>
    </location>
</feature>
<feature type="sequence variant" id="VAR_058176" description="In a chronic myelomonocytic leukemia sample; somatic mutation." evidence="9">
    <original>D</original>
    <variation>G</variation>
    <location>
        <position position="666"/>
    </location>
</feature>
<feature type="sequence variant" id="VAR_058135" description="In myelodysplastic/myeloproliferative disorders; dbSNP:rs753786455." evidence="8">
    <original>S</original>
    <variation>T</variation>
    <location>
        <position position="817"/>
    </location>
</feature>
<feature type="sequence variant" id="VAR_058177" description="In dbSNP:rs144386291." evidence="8 9 11">
    <original>Y</original>
    <variation>H</variation>
    <location>
        <position position="867"/>
    </location>
</feature>
<feature type="sequence variant" id="VAR_039844" description="In dbSNP:rs4145756.">
    <original>A</original>
    <variation>G</variation>
    <location>
        <position position="912"/>
    </location>
</feature>
<feature type="sequence variant" id="VAR_058136" description="In dbSNP:rs34485921." evidence="11">
    <original>H</original>
    <variation>R</variation>
    <location>
        <position position="924"/>
    </location>
</feature>
<feature type="sequence variant" id="VAR_058178" description="In a chronic myelomonocytic leukemia sample; somatic mutation; dbSNP:rs532738858." evidence="9">
    <original>P</original>
    <variation>S</variation>
    <location>
        <position position="941"/>
    </location>
</feature>
<feature type="sequence variant" id="VAR_058137" description="In dbSNP:rs778464072." evidence="11">
    <original>H</original>
    <variation>R</variation>
    <location>
        <position position="949"/>
    </location>
</feature>
<feature type="sequence variant" id="VAR_058179" evidence="9">
    <original>E</original>
    <variation>V</variation>
    <location>
        <position position="1073"/>
    </location>
</feature>
<feature type="sequence variant" id="VAR_058180" description="In dbSNP:rs75056899." evidence="8 9 11">
    <original>Q</original>
    <variation>P</variation>
    <location>
        <position position="1084"/>
    </location>
</feature>
<feature type="sequence variant" id="VAR_058181" description="In a myeloproliferative disorder; somatic mutation; dbSNP:rs769422572." evidence="9">
    <original>C</original>
    <variation>Y</variation>
    <location>
        <position position="1135"/>
    </location>
</feature>
<feature type="sequence variant" id="VAR_058138" description="In a myelodysplatic/myeloproliferative disorder and a chronic myelomonocytic leukemia sample." evidence="8">
    <original>R</original>
    <variation>T</variation>
    <location>
        <position position="1167"/>
    </location>
</feature>
<feature type="sequence variant" id="VAR_058139" description="In a refractory anemia with ringed sideroblasts sample." evidence="10">
    <original>I</original>
    <variation>V</variation>
    <location>
        <position position="1175"/>
    </location>
</feature>
<feature type="sequence variant" id="VAR_058182" description="In a myeloproliferative disorder; somatic mutation." evidence="9">
    <original>S</original>
    <variation>C</variation>
    <location>
        <position position="1204"/>
    </location>
</feature>
<feature type="sequence variant" id="VAR_058183" description="In a myelodysplastic syndrome; somatic mutation in a chronic myelomonocytic leukemia sample; dbSNP:rs761811530." evidence="9 11">
    <original>R</original>
    <variation>W</variation>
    <location>
        <position position="1214"/>
    </location>
</feature>
<feature type="sequence variant" id="VAR_058140" description="In a polycythemia vera sample; somatic mutation." evidence="10">
    <location>
        <begin position="1237"/>
        <end position="1239"/>
    </location>
</feature>
<feature type="sequence variant" id="VAR_058198" description="Requires 2 nucleotide substitutions." evidence="7">
    <original>D</original>
    <variation>R</variation>
    <location>
        <position position="1242"/>
    </location>
</feature>
<feature type="sequence variant" id="VAR_058184" description="In myeloproliferative disorders." evidence="9">
    <original>D</original>
    <variation>V</variation>
    <location>
        <position position="1242"/>
    </location>
</feature>
<feature type="sequence variant" id="VAR_058185" description="In a myeloproliferative disorder; somatic mutation." evidence="9">
    <original>Y</original>
    <variation>S</variation>
    <location>
        <position position="1245"/>
    </location>
</feature>
<feature type="sequence variant" id="VAR_058186" description="In a myeloproliferative disorder; somatic mutation; dbSNP:rs898441677." evidence="9">
    <original>R</original>
    <variation>C</variation>
    <location>
        <position position="1261"/>
    </location>
</feature>
<feature type="sequence variant" id="VAR_058187" description="In a chronic myelomonocytic leukemia sample; somatic mutation; dbSNP:rs771761785." evidence="9">
    <original>R</original>
    <variation>H</variation>
    <location>
        <position position="1261"/>
    </location>
</feature>
<feature type="sequence variant" id="VAR_058141" description="In a myelodysplastic syndrome." evidence="11">
    <original>R</original>
    <variation>L</variation>
    <location>
        <position position="1261"/>
    </location>
</feature>
<feature type="sequence variant" id="VAR_058142" description="In a myelodysplastic syndrome; somatic mutation." evidence="11">
    <location>
        <position position="1285"/>
    </location>
</feature>
<feature type="sequence variant" id="VAR_058143" description="In myelodysplastic/myeloproliferative disorders; no effect on interaction with DCAF1, monoubiquitination, nor on 5-methylcytosine demethylase activity in vivo, when tested in a heterologous system." evidence="8 18">
    <original>F</original>
    <variation>L</variation>
    <location>
        <position position="1287"/>
    </location>
</feature>
<feature type="sequence variant" id="VAR_058144" description="In a myelodysplastic syndrome; somatic mutation; loss of 5-methylcytosine demethylase activity in vivo; no effect on interaction with DCAF1, nor on monoubiquitination, when tested in a heterologous system." evidence="11 16 18">
    <original>W</original>
    <variation>R</variation>
    <location>
        <position position="1291"/>
    </location>
</feature>
<feature type="sequence variant" id="VAR_058145" description="In a refractory anemia sample; loss of monoubiquitination, chromatin binding and 5-methylcytosine demethylase activity in vivo, when tested in a heterologous system." evidence="10 16 18">
    <original>K</original>
    <variation>E</variation>
    <location>
        <position position="1299"/>
    </location>
</feature>
<feature type="sequence variant" id="VAR_058146" description="In chronic myelomonocytic leukemia samples; loss of monoubiquitination, chromatin binding and 5-methylcytosine demethylase activity in vivo, when tested in a heterologous system." evidence="8 18">
    <original>K</original>
    <variation>N</variation>
    <location>
        <position position="1299"/>
    </location>
</feature>
<feature type="sequence variant" id="VAR_058147" description="In primary myelofibrosis and chronic myelomonocytic leukemia samples; loss of interaction with DCAF1, monoubiquitination and of 5-methylcytosine demethylase activity in vivo, when tested in a heterologous system." evidence="8 10 18">
    <original>R</original>
    <variation>G</variation>
    <location>
        <position position="1302"/>
    </location>
</feature>
<feature type="sequence variant" id="VAR_058148" description="In chronic myelomonocytic leukemia samples; no effect on interaction with DCAF1, monoubiquitination, nor on 5-methylcytosine demethylase activity in vivo, when tested in a heterologous system." evidence="8 18">
    <original>E</original>
    <variation>G</variation>
    <location>
        <position position="1318"/>
    </location>
</feature>
<feature type="sequence variant" id="VAR_058149" description="In a chronic myelomonocytic leukemia sample.">
    <original>P</original>
    <variation>S</variation>
    <location>
        <position position="1367"/>
    </location>
</feature>
<feature type="sequence variant" id="VAR_085544" description="In IMD75; loss of methylcytosine dioxygenase activity." evidence="19">
    <original>H</original>
    <variation>R</variation>
    <location>
        <position position="1382"/>
    </location>
</feature>
<feature type="sequence variant" id="VAR_058150" description="In a myelodysplastic syndrome." evidence="11">
    <original>C</original>
    <variation>W</variation>
    <location>
        <position position="1396"/>
    </location>
</feature>
<feature type="sequence variant" id="VAR_058151" description="In a myelodysplastic syndrome; somatic mutation." evidence="11">
    <original>L</original>
    <variation>R</variation>
    <location>
        <position position="1398"/>
    </location>
</feature>
<feature type="sequence variant" id="VAR_058188" description="In a chronic myelomonocytic leukemia sample; somatic mutation; dbSNP:rs749210253." evidence="9">
    <original>V</original>
    <variation>F</variation>
    <location>
        <position position="1417"/>
    </location>
</feature>
<feature type="sequence variant" id="VAR_085545" description="In IMD75; loss of protein expression; loss of methylcytosine dioxygenase activity." evidence="19">
    <location>
        <begin position="1632"/>
        <end position="2002"/>
    </location>
</feature>
<feature type="sequence variant" id="VAR_058189" description="In dbSNP:rs62623390." evidence="11">
    <original>M</original>
    <variation>I</variation>
    <location>
        <position position="1701"/>
    </location>
</feature>
<feature type="sequence variant" id="VAR_058190" description="In refractory anemia with ringed sideroblasts; somatic mutation in an acute myeloid leukemia sample; dbSNP:rs142312318." evidence="8 9">
    <original>V</original>
    <variation>L</variation>
    <location>
        <position position="1718"/>
    </location>
</feature>
<feature type="sequence variant" id="VAR_058191" description="In dbSNP:rs34402524." evidence="11">
    <original>L</original>
    <variation>W</variation>
    <location>
        <position position="1721"/>
    </location>
</feature>
<feature type="sequence variant" id="VAR_058192" description="In dbSNP:rs146348065." evidence="9 11">
    <original>P</original>
    <variation>S</variation>
    <location>
        <position position="1723"/>
    </location>
</feature>
<feature type="sequence variant" id="VAR_058152" description="In a chronic myelomonocytic leukemia sample; somatic mutation." evidence="9">
    <original>H</original>
    <variation>D</variation>
    <location>
        <position position="1757"/>
    </location>
</feature>
<feature type="sequence variant" id="VAR_058193" description="In dbSNP:rs2454206." evidence="4 11">
    <original>I</original>
    <variation>V</variation>
    <location>
        <position position="1762"/>
    </location>
</feature>
<feature type="sequence variant" id="VAR_058194" description="In dbSNP:rs62621450." evidence="11">
    <original>H</original>
    <variation>R</variation>
    <location>
        <position position="1778"/>
    </location>
</feature>
<feature type="sequence variant" id="VAR_058153" description="In a chronic myelomonocytic leukemia sample; somatic mutation." evidence="9">
    <original>C</original>
    <variation>R</variation>
    <location>
        <position position="1811"/>
    </location>
</feature>
<feature type="sequence variant" id="VAR_058154" description="In a myeloproliferative disorder; somatic mutation." evidence="9">
    <original>Q</original>
    <variation>L</variation>
    <location>
        <position position="1828"/>
    </location>
</feature>
<feature type="sequence variant" id="VAR_058155" description="In an essential thrombocythemia sample; dbSNP:rs1453845082." evidence="10">
    <original>G</original>
    <variation>W</variation>
    <location>
        <position position="1869"/>
    </location>
</feature>
<feature type="sequence variant" id="VAR_058156" description="In a refractory anemia with excess blasts sample." evidence="10">
    <original>L</original>
    <variation>P</variation>
    <location>
        <position position="1872"/>
    </location>
</feature>
<feature type="sequence variant" id="VAR_058157" description="In myelodysplastic syndromes, myeloproliferative disorders and chronic myelomonocytic leukemia; somatic mutation in acute myeloid leukemia and chronic myelomonocytic leukemia samples; dbSNP:rs116519313." evidence="7 8 9 10 11">
    <original>I</original>
    <variation>T</variation>
    <location>
        <position position="1873"/>
    </location>
</feature>
<feature type="sequence variant" id="VAR_058195" description="In a myelodysplastic syndrome; somatic mutation." evidence="11">
    <original>C</original>
    <variation>R</variation>
    <location>
        <position position="1875"/>
    </location>
</feature>
<feature type="sequence variant" id="VAR_058196" description="In a myelodysplastic syndrome; somatic mutation." evidence="11">
    <original>H</original>
    <variation>Q</variation>
    <location>
        <position position="1881"/>
    </location>
</feature>
<feature type="sequence variant" id="VAR_058158" description="In a myeloproliferative disorder; somatic mutation; also in a patient with systemic mastocytosis associated with chronic myelomonocytic leukemia; dbSNP:rs1417392445." evidence="6 9">
    <original>H</original>
    <variation>R</variation>
    <location>
        <position position="1881"/>
    </location>
</feature>
<feature type="sequence variant" id="VAR_058159" description="In a primary acute myeloid leukemia sample; somatic mutation; reduces enzyme activity." evidence="10 16">
    <original>R</original>
    <variation>M</variation>
    <location>
        <position position="1896"/>
    </location>
</feature>
<feature type="sequence variant" id="VAR_058197" description="In a myeloproliferative disorder; somatic mutation." evidence="11">
    <original>R</original>
    <variation>S</variation>
    <location>
        <position position="1896"/>
    </location>
</feature>
<feature type="sequence variant" id="VAR_058160" description="In a secondary acute myeloid leukemia sample; somatic mutation; loss of enzyme activity; dbSNP:rs767475870." evidence="10 16">
    <original>S</original>
    <variation>F</variation>
    <location>
        <position position="1898"/>
    </location>
</feature>
<feature type="sequence variant" id="VAR_058161" evidence="9">
    <original>V</original>
    <variation>A</variation>
    <location>
        <position position="1900"/>
    </location>
</feature>
<feature type="sequence variant" id="VAR_058162" description="In a myelodysplastic syndrome; somatic mutation." evidence="11">
    <location>
        <begin position="1911"/>
        <end position="1916"/>
    </location>
</feature>
<feature type="sequence variant" id="VAR_058163" description="In myelodysplastic syndromes; refractory cytopenia with multilineage dysplasia and ringed sideroblasts; somatic mutation in a patient." evidence="8 11">
    <original>G</original>
    <variation>D</variation>
    <location>
        <position position="1913"/>
    </location>
</feature>
<feature type="sequence variant" id="VAR_058164" description="In a myeloproliferative disorder; somatic mutation; dbSNP:rs1163887807." evidence="9">
    <original>A</original>
    <variation>V</variation>
    <location>
        <position position="1919"/>
    </location>
</feature>
<feature type="sequence variant" id="VAR_058165" description="In a chronic myelomonocytic leukemia sample; somatic mutation; dbSNP:rs1316795626." evidence="9">
    <original>R</original>
    <variation>H</variation>
    <location>
        <position position="1926"/>
    </location>
</feature>
<feature type="sequence variant" id="VAR_058166" description="In a chronic myelomonocytic leukemia sample; somatic mutation; dbSNP:rs1283441077." evidence="9">
    <original>P</original>
    <variation>S</variation>
    <location>
        <position position="1941"/>
    </location>
</feature>
<feature type="sequence variant" id="VAR_058167" description="In a myelodysplastic syndrome; dbSNP:rs200971953." evidence="11">
    <original>P</original>
    <variation>L</variation>
    <location>
        <position position="1962"/>
    </location>
</feature>
<feature type="sequence variant" id="VAR_058168" description="In a chronic myelomonocytic leukemia sample; somatic mutation; dbSNP:rs754215085." evidence="9">
    <original>R</original>
    <variation>H</variation>
    <location>
        <position position="1966"/>
    </location>
</feature>
<feature type="sequence variant" id="VAR_058169" description="In a chronic myelomonocytic leukemia sample; somatic mutation; dbSNP:rs1406914931." evidence="9">
    <original>R</original>
    <variation>M</variation>
    <location>
        <position position="1974"/>
    </location>
</feature>
<feature type="sequence variant" id="VAR_058170" evidence="9">
    <original>R</original>
    <variation>K</variation>
    <location>
        <position position="2000"/>
    </location>
</feature>
<feature type="mutagenesis site" description="Loss of enzyme activity." evidence="16">
    <original>R</original>
    <variation>G</variation>
    <location>
        <position position="1261"/>
    </location>
</feature>
<feature type="mutagenesis site" description="Slightly reduces enzyme activity." evidence="16">
    <original>R</original>
    <variation>A</variation>
    <location>
        <position position="1262"/>
    </location>
</feature>
<feature type="mutagenesis site" description="Reduces enzyme activity; when associated with A-1295." evidence="16">
    <original>S</original>
    <variation>A</variation>
    <location>
        <position position="1290"/>
    </location>
</feature>
<feature type="mutagenesis site" description="Loss of enzyme activity." evidence="16">
    <original>WSMYYN</original>
    <variation>GGSGGS</variation>
    <location>
        <begin position="1291"/>
        <end position="1296"/>
    </location>
</feature>
<feature type="mutagenesis site" description="No effect on interaction with DCAF1, monoubiquitination, nor on 5-methylcytosine demethylase activity in vivo, when tested in a heterologous system." evidence="18">
    <original>S</original>
    <variation>R</variation>
    <location>
        <position position="1292"/>
    </location>
</feature>
<feature type="mutagenesis site" description="Strongly reduced enzyme activity. Slightly decreased affinity for DNA." evidence="16">
    <original>MY</original>
    <variation>AA</variation>
    <location>
        <begin position="1293"/>
        <end position="1294"/>
    </location>
</feature>
<feature type="mutagenesis site" description="Reduces enzyme activity; when associated with A-1290." evidence="16">
    <original>Y</original>
    <variation>A</variation>
    <location>
        <position position="1295"/>
    </location>
</feature>
<feature type="mutagenesis site" description="Loss of monoubiquitination and of 5-methylcytosine demethylase activity in vivo. No effect on interaction with DCAF1, when tested in a heterologous system." evidence="18">
    <original>C</original>
    <variation>Y</variation>
    <location>
        <position position="1298"/>
    </location>
</feature>
<feature type="mutagenesis site" description="Loss of interaction with DCAF1, monoubiquitination and of 5-methylcytosine demethylase activity in vivo, when tested in a heterologous system." evidence="18">
    <original>F</original>
    <variation>S</variation>
    <location>
        <position position="1300"/>
    </location>
</feature>
<feature type="mutagenesis site" description="Loss of enzyme activity; when associated with E-1299." evidence="16">
    <original>S</original>
    <variation>N</variation>
    <location>
        <position position="1303"/>
    </location>
</feature>
<feature type="mutagenesis site" description="Loss of enzyme activity. Still able to enhance histone H2B GlcNAcylation by OGT; when associated with A-1384. Loss of enzyme activity; when associated with V-1384." evidence="14 16">
    <original>H</original>
    <variation>Y</variation>
    <location>
        <position position="1382"/>
    </location>
</feature>
<feature type="mutagenesis site" description="Loss of enzyme activity. Still able to enhance histone H2B GlcNAcylation by OGT; when associated with Y-1382." evidence="14 16">
    <original>D</original>
    <variation>A</variation>
    <location>
        <position position="1384"/>
    </location>
</feature>
<feature type="mutagenesis site" description="Loss of enzyme activity; when associated with Y-1382." evidence="14 16">
    <original>D</original>
    <variation>V</variation>
    <location>
        <position position="1384"/>
    </location>
</feature>
<feature type="mutagenesis site" description="Near loss of enzyme activity." evidence="16">
    <original>N</original>
    <variation>A</variation>
    <location>
        <position position="1387"/>
    </location>
</feature>
<feature type="mutagenesis site" description="Loss of enzyme activity." evidence="16">
    <original>Y</original>
    <variation>A</variation>
    <location>
        <position position="1902"/>
    </location>
</feature>
<feature type="mutagenesis site" description="Loss of enzyme activity." evidence="16">
    <original>H</original>
    <variation>R</variation>
    <location>
        <position position="1904"/>
    </location>
</feature>
<feature type="sequence conflict" description="In Ref. 3; BAA90898." evidence="25" ref="3">
    <original>Q</original>
    <variation>R</variation>
    <location>
        <position position="599"/>
    </location>
</feature>
<feature type="sequence conflict" description="In Ref. 1; CAE45851." evidence="25" ref="1">
    <original>H</original>
    <variation>Q</variation>
    <location>
        <position position="702"/>
    </location>
</feature>
<feature type="sequence conflict" description="In Ref. 4; BAE45750." evidence="25" ref="4">
    <original>L</original>
    <variation>S</variation>
    <location>
        <position position="878"/>
    </location>
</feature>
<feature type="strand" evidence="32">
    <location>
        <begin position="1135"/>
        <end position="1138"/>
    </location>
</feature>
<feature type="helix" evidence="32">
    <location>
        <begin position="1141"/>
        <end position="1144"/>
    </location>
</feature>
<feature type="strand" evidence="32">
    <location>
        <begin position="1153"/>
        <end position="1156"/>
    </location>
</feature>
<feature type="helix" evidence="32">
    <location>
        <begin position="1157"/>
        <end position="1168"/>
    </location>
</feature>
<feature type="helix" evidence="32">
    <location>
        <begin position="1172"/>
        <end position="1174"/>
    </location>
</feature>
<feature type="strand" evidence="32">
    <location>
        <begin position="1175"/>
        <end position="1182"/>
    </location>
</feature>
<feature type="strand" evidence="32">
    <location>
        <begin position="1197"/>
        <end position="1200"/>
    </location>
</feature>
<feature type="strand" evidence="32">
    <location>
        <begin position="1209"/>
        <end position="1215"/>
    </location>
</feature>
<feature type="strand" evidence="32">
    <location>
        <begin position="1224"/>
        <end position="1234"/>
    </location>
</feature>
<feature type="helix" evidence="32">
    <location>
        <begin position="1238"/>
        <end position="1255"/>
    </location>
</feature>
<feature type="helix" evidence="32">
    <location>
        <begin position="1262"/>
        <end position="1264"/>
    </location>
</feature>
<feature type="turn" evidence="32">
    <location>
        <begin position="1278"/>
        <end position="1280"/>
    </location>
</feature>
<feature type="strand" evidence="32">
    <location>
        <begin position="1283"/>
        <end position="1288"/>
    </location>
</feature>
<feature type="turn" evidence="32">
    <location>
        <begin position="1293"/>
        <end position="1296"/>
    </location>
</feature>
<feature type="turn" evidence="32">
    <location>
        <begin position="1299"/>
        <end position="1302"/>
    </location>
</feature>
<feature type="strand" evidence="30">
    <location>
        <begin position="1312"/>
        <end position="1314"/>
    </location>
</feature>
<feature type="helix" evidence="32">
    <location>
        <begin position="1316"/>
        <end position="1340"/>
    </location>
</feature>
<feature type="helix" evidence="32">
    <location>
        <begin position="1342"/>
        <end position="1348"/>
    </location>
</feature>
<feature type="turn" evidence="32">
    <location>
        <begin position="1349"/>
        <end position="1354"/>
    </location>
</feature>
<feature type="helix" evidence="32">
    <location>
        <begin position="1356"/>
        <end position="1358"/>
    </location>
</feature>
<feature type="strand" evidence="32">
    <location>
        <begin position="1362"/>
        <end position="1364"/>
    </location>
</feature>
<feature type="strand" evidence="32">
    <location>
        <begin position="1370"/>
        <end position="1376"/>
    </location>
</feature>
<feature type="strand" evidence="32">
    <location>
        <begin position="1393"/>
        <end position="1399"/>
    </location>
</feature>
<feature type="helix" evidence="31">
    <location>
        <begin position="1401"/>
        <end position="1403"/>
    </location>
</feature>
<feature type="strand" evidence="30">
    <location>
        <begin position="1405"/>
        <end position="1408"/>
    </location>
</feature>
<feature type="strand" evidence="32">
    <location>
        <begin position="1416"/>
        <end position="1418"/>
    </location>
</feature>
<feature type="strand" evidence="32">
    <location>
        <begin position="1421"/>
        <end position="1423"/>
    </location>
</feature>
<feature type="helix" evidence="32">
    <location>
        <begin position="1432"/>
        <end position="1440"/>
    </location>
</feature>
<feature type="strand" evidence="32">
    <location>
        <begin position="1443"/>
        <end position="1446"/>
    </location>
</feature>
<feature type="strand" evidence="32">
    <location>
        <begin position="1451"/>
        <end position="1459"/>
    </location>
</feature>
<feature type="strand" evidence="32">
    <location>
        <begin position="1844"/>
        <end position="1849"/>
    </location>
</feature>
<feature type="helix" evidence="32">
    <location>
        <begin position="1851"/>
        <end position="1855"/>
    </location>
</feature>
<feature type="strand" evidence="32">
    <location>
        <begin position="1862"/>
        <end position="1864"/>
    </location>
</feature>
<feature type="strand" evidence="32">
    <location>
        <begin position="1871"/>
        <end position="1874"/>
    </location>
</feature>
<feature type="turn" evidence="32">
    <location>
        <begin position="1876"/>
        <end position="1878"/>
    </location>
</feature>
<feature type="strand" evidence="32">
    <location>
        <begin position="1881"/>
        <end position="1883"/>
    </location>
</feature>
<feature type="strand" evidence="32">
    <location>
        <begin position="1895"/>
        <end position="1902"/>
    </location>
</feature>
<feature type="strand" evidence="31">
    <location>
        <begin position="1904"/>
        <end position="1906"/>
    </location>
</feature>
<feature type="helix" evidence="32">
    <location>
        <begin position="1910"/>
        <end position="1913"/>
    </location>
</feature>
<feature type="helix" evidence="32">
    <location>
        <begin position="1914"/>
        <end position="1920"/>
    </location>
</feature>
<comment type="function">
    <text evidence="11 12 13 14 15 16 19">Dioxygenase that catalyzes the conversion of the modified genomic base 5-methylcytosine (5mC) into 5-hydroxymethylcytosine (5hmC) and plays a key role in active DNA demethylation. Has a preference for 5-hydroxymethylcytosine in CpG motifs. Also mediates subsequent conversion of 5hmC into 5-formylcytosine (5fC), and conversion of 5fC to 5-carboxylcytosine (5caC). Conversion of 5mC into 5hmC, 5fC and 5caC probably constitutes the first step in cytosine demethylation. Methylation at the C5 position of cytosine bases is an epigenetic modification of the mammalian genome which plays an important role in transcriptional regulation. In addition to its role in DNA demethylation, also involved in the recruitment of the O-GlcNAc transferase OGT to CpG-rich transcription start sites of active genes, thereby promoting histone H2B GlcNAcylation by OGT.</text>
</comment>
<comment type="catalytic activity">
    <reaction evidence="16 19">
        <text>a 5-methyl-2'-deoxycytidine in DNA + 2-oxoglutarate + O2 = a 5-hydroxymethyl-2'-deoxycytidine in DNA + succinate + CO2</text>
        <dbReference type="Rhea" id="RHEA:52636"/>
        <dbReference type="Rhea" id="RHEA-COMP:11370"/>
        <dbReference type="Rhea" id="RHEA-COMP:13315"/>
        <dbReference type="ChEBI" id="CHEBI:15379"/>
        <dbReference type="ChEBI" id="CHEBI:16526"/>
        <dbReference type="ChEBI" id="CHEBI:16810"/>
        <dbReference type="ChEBI" id="CHEBI:30031"/>
        <dbReference type="ChEBI" id="CHEBI:85454"/>
        <dbReference type="ChEBI" id="CHEBI:136731"/>
        <dbReference type="EC" id="1.14.11.80"/>
    </reaction>
    <physiologicalReaction direction="left-to-right" evidence="19">
        <dbReference type="Rhea" id="RHEA:52637"/>
    </physiologicalReaction>
</comment>
<comment type="catalytic activity">
    <reaction evidence="16">
        <text>a 5-hydroxymethyl-2'-deoxycytidine in DNA + 2-oxoglutarate + O2 = a 5-formyl-2'-deoxycytidine in DNA + succinate + CO2 + H2O</text>
        <dbReference type="Rhea" id="RHEA:53828"/>
        <dbReference type="Rhea" id="RHEA-COMP:13315"/>
        <dbReference type="Rhea" id="RHEA-COMP:13656"/>
        <dbReference type="ChEBI" id="CHEBI:15377"/>
        <dbReference type="ChEBI" id="CHEBI:15379"/>
        <dbReference type="ChEBI" id="CHEBI:16526"/>
        <dbReference type="ChEBI" id="CHEBI:16810"/>
        <dbReference type="ChEBI" id="CHEBI:30031"/>
        <dbReference type="ChEBI" id="CHEBI:136731"/>
        <dbReference type="ChEBI" id="CHEBI:137731"/>
        <dbReference type="EC" id="1.14.11.80"/>
    </reaction>
</comment>
<comment type="catalytic activity">
    <reaction evidence="16">
        <text>a 5-formyl-2'-deoxycytidine in DNA + 2-oxoglutarate + O2 = a 5-carboxyl-2'-deoxycytidine in DNA + succinate + CO2 + H(+)</text>
        <dbReference type="Rhea" id="RHEA:53832"/>
        <dbReference type="Rhea" id="RHEA-COMP:13656"/>
        <dbReference type="Rhea" id="RHEA-COMP:13657"/>
        <dbReference type="ChEBI" id="CHEBI:15378"/>
        <dbReference type="ChEBI" id="CHEBI:15379"/>
        <dbReference type="ChEBI" id="CHEBI:16526"/>
        <dbReference type="ChEBI" id="CHEBI:16810"/>
        <dbReference type="ChEBI" id="CHEBI:30031"/>
        <dbReference type="ChEBI" id="CHEBI:137731"/>
        <dbReference type="ChEBI" id="CHEBI:137732"/>
        <dbReference type="EC" id="1.14.11.80"/>
    </reaction>
</comment>
<comment type="cofactor">
    <cofactor evidence="16">
        <name>Fe(2+)</name>
        <dbReference type="ChEBI" id="CHEBI:29033"/>
    </cofactor>
    <text evidence="16">Binds 1 Fe(2+) ion per subunit.</text>
</comment>
<comment type="cofactor">
    <cofactor evidence="16">
        <name>Zn(2+)</name>
        <dbReference type="ChEBI" id="CHEBI:29105"/>
    </cofactor>
    <text evidence="16">Binds 3 zinc ions per subunit. The zinc ions have a structural role (PubMed:24315485).</text>
</comment>
<comment type="subunit">
    <text evidence="14 15 16 17 18 20">Interacts with HCFC1 (PubMed:23353889). Interacts with OGT (PubMed:23222540, PubMed:23353889). Interacts with PROSER1; this interaction mediates TET2 O-GlcNAcylation and stability by promoting the interaction between OGT and TET2 (PubMed:34667079). Directly interacts (via C-terminus) with the DCAF1 component of the CRL4(VprBP) E3 ubiquitin-protein ligase complex (PubMed:24357321, PubMed:25557551).</text>
</comment>
<comment type="interaction">
    <interactant intactId="EBI-310727">
        <id>Q6N021</id>
    </interactant>
    <interactant intactId="EBI-348399">
        <id>P22607</id>
        <label>FGFR3</label>
    </interactant>
    <organismsDiffer>false</organismsDiffer>
    <experiments>3</experiments>
</comment>
<comment type="interaction">
    <interactant intactId="EBI-310727">
        <id>Q6N021</id>
    </interactant>
    <interactant intactId="EBI-351506">
        <id>P06396</id>
        <label>GSN</label>
    </interactant>
    <organismsDiffer>false</organismsDiffer>
    <experiments>3</experiments>
</comment>
<comment type="interaction">
    <interactant intactId="EBI-310727">
        <id>Q6N021</id>
    </interactant>
    <interactant intactId="EBI-539828">
        <id>O15294</id>
        <label>OGT</label>
    </interactant>
    <organismsDiffer>false</organismsDiffer>
    <experiments>7</experiments>
</comment>
<comment type="interaction">
    <interactant intactId="EBI-310727">
        <id>Q6N021</id>
    </interactant>
    <interactant intactId="EBI-295890">
        <id>P29590</id>
        <label>PML</label>
    </interactant>
    <organismsDiffer>false</organismsDiffer>
    <experiments>2</experiments>
</comment>
<comment type="interaction">
    <interactant intactId="EBI-310727">
        <id>Q6N021</id>
    </interactant>
    <interactant intactId="EBI-953955">
        <id>P04279</id>
        <label>SEMG1</label>
    </interactant>
    <organismsDiffer>false</organismsDiffer>
    <experiments>2</experiments>
</comment>
<comment type="interaction">
    <interactant intactId="EBI-310727">
        <id>Q6N021</id>
    </interactant>
    <interactant intactId="EBI-2320534">
        <id>P19544</id>
        <label>WT1</label>
    </interactant>
    <organismsDiffer>false</organismsDiffer>
    <experiments>9</experiments>
</comment>
<comment type="interaction">
    <interactant intactId="EBI-20717492">
        <id>Q6N021-1</id>
    </interactant>
    <interactant intactId="EBI-539828">
        <id>O15294</id>
        <label>OGT</label>
    </interactant>
    <organismsDiffer>false</organismsDiffer>
    <experiments>5</experiments>
</comment>
<comment type="subcellular location">
    <subcellularLocation>
        <location evidence="18">Nucleus</location>
    </subcellularLocation>
    <subcellularLocation>
        <location evidence="18">Chromosome</location>
    </subcellularLocation>
    <text evidence="18">Localization to chromatin depends upon monoubiquitination at Lys-1299.</text>
</comment>
<comment type="alternative products">
    <event type="alternative splicing"/>
    <isoform>
        <id>Q6N021-1</id>
        <name>1</name>
        <sequence type="displayed"/>
    </isoform>
    <isoform>
        <id>Q6N021-2</id>
        <name>2</name>
        <sequence type="described" ref="VSP_032283 VSP_032284"/>
    </isoform>
    <isoform>
        <id>Q6N021-3</id>
        <name>3</name>
        <sequence type="described" ref="VSP_032282 VSP_032285"/>
    </isoform>
</comment>
<comment type="tissue specificity">
    <text evidence="3 11">Broadly expressed. Highly expressed in hematopoietic cells; highest expression observed in granulocytes. Expression is reduced in granulocytes from peripheral blood of patients affected by myelodysplastic syndromes.</text>
</comment>
<comment type="PTM">
    <text evidence="15">May be glycosylated. It is unclear whether interaction with OGT leads to GlcNAcylation. According to a report, it is not GlcNAcylated by OGT (PubMed:23353889). In contrast, another group reports GlcNAcylation by OGT in mouse ortholog.</text>
</comment>
<comment type="PTM">
    <text evidence="18">Monoubiquitinated at Lys-1299 by the DCX (DDB1-CUL4-X-box) E3 ubiquitin-protein ligase complex called CRL4(VprBP) or CUL4A-RBX1-DDB1-DCAF1/VPRBP complex; this modification promotes binding to DNA.</text>
</comment>
<comment type="PTM">
    <text evidence="21">Acetylated (PubMed:39567688). Deacetylase HDAC6 acts as a valine sensor by binding to valine through its primate-specific SE14 repeat region and deacetylates TET2 following valine deprivation which promotes TET2-dependent DNA demethylation (PubMed:39567688).</text>
</comment>
<comment type="disease">
    <text>TET2 is frequently mutated in myeloproliferative disorders (MPD). These constitute a heterogeneous group of disorders, also known as myeloproliferative diseases or myeloproliferative neoplasms (MPN), characterized by cellular proliferation of one or more hematologic cell lines in the peripheral blood, distinct from acute leukemia. Included diseases are: essential thrombocythemia, polycythemia vera, primary myelofibrosis (chronic idiopathic myelofibrosis). Bone marrow samples from patients display uniformly low levels of hmC in genomic DNA compared to bone marrow samples from healthy controls as well as hypomethylation relative to controls at the majority of differentially methylated CpG sites.</text>
</comment>
<comment type="disease">
    <disease id="DI-02712">
        <name>Polycythemia vera</name>
        <acronym>PV</acronym>
        <description>A myeloproliferative disorder characterized by abnormal proliferation of all hematopoietic bone marrow elements, erythroid hyperplasia, an absolute increase in total blood volume, but also by myeloid leukocytosis, thrombocytosis and splenomegaly.</description>
        <dbReference type="MIM" id="263300"/>
    </disease>
    <text>The disease is caused by variants affecting the gene represented in this entry.</text>
</comment>
<comment type="disease">
    <text>TET2 is frequently mutated in systemic mastocytosis; also known as systemic mast cell disease. A condition with features in common with myeloproliferative diseases. It is a clonal disorder of the mast cell and its precursor cells. The clinical symptoms and signs of systemic mastocytosis are due to accumulation of clonally derived mast cells in different tissues, including bone marrow, skin, the gastrointestinal tract, the liver, and the spleen.</text>
</comment>
<comment type="disease" evidence="8 11 12">
    <disease id="DI-03291">
        <name>Myelodysplastic syndrome</name>
        <acronym>MDS</acronym>
        <description>A heterogeneous group of closely related clonal hematopoietic disorders. All are characterized by a hypercellular or hypocellular bone marrow with impaired morphology and maturation, dysplasia of the myeloid, megakaryocytic and/or erythroid lineages, and peripheral blood cytopenias resulting from ineffective blood cell production. Included diseases are: refractory anemia (RA), refractory anemia with ringed sideroblasts (RARS), refractory anemia with excess blasts (RAEB), refractory cytopenia with multilineage dysplasia and ringed sideroblasts (RCMD-RS); chronic myelomonocytic leukemia (CMML) is a myelodysplastic/myeloproliferative disease. MDS is considered a premalignant condition in a subgroup of patients that often progresses to acute myeloid leukemia (AML).</description>
        <dbReference type="MIM" id="614286"/>
    </disease>
    <text>The disease is caused by variants affecting the gene represented in this entry. Bone marrow samples from patients display uniformly low levels of hmC in genomic DNA compared to bone marrow samples from healthy controls as well as hypomethylation relative to controls at the majority of differentially methylated CpG sites.</text>
</comment>
<comment type="disease" evidence="19">
    <disease id="DI-05992">
        <name>Immunodeficiency 75 with lymphoproliferation</name>
        <acronym>IMD75</acronym>
        <description>An autosomal recessive immunologic disorder characterized by recurrent infections, mainly viral and affecting the respiratory tract, immunodeficieny, immune dysregulation, and the development of lymphoproliferative disorders, including lymphoma.</description>
        <dbReference type="MIM" id="619126"/>
    </disease>
    <text>The disease is caused by variants affecting the gene represented in this entry.</text>
</comment>
<comment type="miscellaneous">
    <molecule>Isoform 3</molecule>
    <text evidence="25">May be produced at very low levels due to a premature stop codon in the mRNA, leading to nonsense-mediated mRNA decay.</text>
</comment>
<comment type="similarity">
    <text evidence="25">Belongs to the TET family.</text>
</comment>
<comment type="caution">
    <text evidence="26">Subsequent steps in cytosine demethylation are subject to discussion. According to a first model cytosine demethylation occurs through deamination of 5hmC into 5-hydroxymethyluracil (5hmU) and subsequent replacement by unmethylated cytosine by the base excision repair system. According to another model, cytosine demethylation is rather mediated via conversion of 5hmC into 5fC and 5caC, followed by excision by TDG (PubMed:21817016).</text>
</comment>
<comment type="sequence caution" evidence="25">
    <conflict type="erroneous termination">
        <sequence resource="EMBL-CDS" id="BAA90898"/>
    </conflict>
    <text>Truncated C-terminus.</text>
</comment>
<comment type="sequence caution" evidence="25">
    <conflict type="frameshift">
        <sequence resource="EMBL-CDS" id="BAA90898"/>
    </conflict>
</comment>
<comment type="sequence caution" evidence="25">
    <conflict type="miscellaneous discrepancy">
        <sequence resource="EMBL-CDS" id="BAA90898"/>
    </conflict>
    <text>Contaminating sequence. Potential poly-A sequence.</text>
</comment>
<comment type="sequence caution" evidence="25">
    <conflict type="erroneous initiation">
        <sequence resource="EMBL-CDS" id="BAB55391"/>
    </conflict>
    <text>Truncated N-terminus.</text>
</comment>
<gene>
    <name type="primary">TET2</name>
    <name type="synonym">KIAA1546</name>
    <name type="ORF">Nbla00191</name>
</gene>
<protein>
    <recommendedName>
        <fullName>Methylcytosine dioxygenase TET2</fullName>
        <ecNumber evidence="16 19">1.14.11.80</ecNumber>
    </recommendedName>
</protein>
<evidence type="ECO:0000250" key="1">
    <source>
        <dbReference type="UniProtKB" id="Q4JK59"/>
    </source>
</evidence>
<evidence type="ECO:0000256" key="2">
    <source>
        <dbReference type="SAM" id="MobiDB-lite"/>
    </source>
</evidence>
<evidence type="ECO:0000269" key="3">
    <source>
    </source>
</evidence>
<evidence type="ECO:0000269" key="4">
    <source>
    </source>
</evidence>
<evidence type="ECO:0000269" key="5">
    <source>
    </source>
</evidence>
<evidence type="ECO:0000269" key="6">
    <source>
    </source>
</evidence>
<evidence type="ECO:0000269" key="7">
    <source>
    </source>
</evidence>
<evidence type="ECO:0000269" key="8">
    <source>
    </source>
</evidence>
<evidence type="ECO:0000269" key="9">
    <source>
    </source>
</evidence>
<evidence type="ECO:0000269" key="10">
    <source>
    </source>
</evidence>
<evidence type="ECO:0000269" key="11">
    <source>
    </source>
</evidence>
<evidence type="ECO:0000269" key="12">
    <source>
    </source>
</evidence>
<evidence type="ECO:0000269" key="13">
    <source>
    </source>
</evidence>
<evidence type="ECO:0000269" key="14">
    <source>
    </source>
</evidence>
<evidence type="ECO:0000269" key="15">
    <source>
    </source>
</evidence>
<evidence type="ECO:0000269" key="16">
    <source>
    </source>
</evidence>
<evidence type="ECO:0000269" key="17">
    <source>
    </source>
</evidence>
<evidence type="ECO:0000269" key="18">
    <source>
    </source>
</evidence>
<evidence type="ECO:0000269" key="19">
    <source>
    </source>
</evidence>
<evidence type="ECO:0000269" key="20">
    <source>
    </source>
</evidence>
<evidence type="ECO:0000269" key="21">
    <source>
    </source>
</evidence>
<evidence type="ECO:0000303" key="22">
    <source>
    </source>
</evidence>
<evidence type="ECO:0000303" key="23">
    <source>
    </source>
</evidence>
<evidence type="ECO:0000303" key="24">
    <source>
    </source>
</evidence>
<evidence type="ECO:0000305" key="25"/>
<evidence type="ECO:0000305" key="26">
    <source>
    </source>
</evidence>
<evidence type="ECO:0007744" key="27">
    <source>
    </source>
</evidence>
<evidence type="ECO:0007744" key="28">
    <source>
    </source>
</evidence>
<evidence type="ECO:0007744" key="29">
    <source>
    </source>
</evidence>
<evidence type="ECO:0007829" key="30">
    <source>
        <dbReference type="PDB" id="4NM6"/>
    </source>
</evidence>
<evidence type="ECO:0007829" key="31">
    <source>
        <dbReference type="PDB" id="5D9Y"/>
    </source>
</evidence>
<evidence type="ECO:0007829" key="32">
    <source>
        <dbReference type="PDB" id="5DEU"/>
    </source>
</evidence>
<reference key="1">
    <citation type="journal article" date="2007" name="BMC Genomics">
        <title>The full-ORF clone resource of the German cDNA consortium.</title>
        <authorList>
            <person name="Bechtel S."/>
            <person name="Rosenfelder H."/>
            <person name="Duda A."/>
            <person name="Schmidt C.P."/>
            <person name="Ernst U."/>
            <person name="Wellenreuther R."/>
            <person name="Mehrle A."/>
            <person name="Schuster C."/>
            <person name="Bahr A."/>
            <person name="Bloecker H."/>
            <person name="Heubner D."/>
            <person name="Hoerlein A."/>
            <person name="Michel G."/>
            <person name="Wedler H."/>
            <person name="Koehrer K."/>
            <person name="Ottenwaelder B."/>
            <person name="Poustka A."/>
            <person name="Wiemann S."/>
            <person name="Schupp I."/>
        </authorList>
    </citation>
    <scope>NUCLEOTIDE SEQUENCE [LARGE SCALE MRNA] (ISOFORM 2)</scope>
    <scope>VARIANT MET-218</scope>
    <source>
        <tissue>Fetal kidney</tissue>
    </source>
</reference>
<reference key="2">
    <citation type="journal article" date="2005" name="Nature">
        <title>Generation and annotation of the DNA sequences of human chromosomes 2 and 4.</title>
        <authorList>
            <person name="Hillier L.W."/>
            <person name="Graves T.A."/>
            <person name="Fulton R.S."/>
            <person name="Fulton L.A."/>
            <person name="Pepin K.H."/>
            <person name="Minx P."/>
            <person name="Wagner-McPherson C."/>
            <person name="Layman D."/>
            <person name="Wylie K."/>
            <person name="Sekhon M."/>
            <person name="Becker M.C."/>
            <person name="Fewell G.A."/>
            <person name="Delehaunty K.D."/>
            <person name="Miner T.L."/>
            <person name="Nash W.E."/>
            <person name="Kremitzki C."/>
            <person name="Oddy L."/>
            <person name="Du H."/>
            <person name="Sun H."/>
            <person name="Bradshaw-Cordum H."/>
            <person name="Ali J."/>
            <person name="Carter J."/>
            <person name="Cordes M."/>
            <person name="Harris A."/>
            <person name="Isak A."/>
            <person name="van Brunt A."/>
            <person name="Nguyen C."/>
            <person name="Du F."/>
            <person name="Courtney L."/>
            <person name="Kalicki J."/>
            <person name="Ozersky P."/>
            <person name="Abbott S."/>
            <person name="Armstrong J."/>
            <person name="Belter E.A."/>
            <person name="Caruso L."/>
            <person name="Cedroni M."/>
            <person name="Cotton M."/>
            <person name="Davidson T."/>
            <person name="Desai A."/>
            <person name="Elliott G."/>
            <person name="Erb T."/>
            <person name="Fronick C."/>
            <person name="Gaige T."/>
            <person name="Haakenson W."/>
            <person name="Haglund K."/>
            <person name="Holmes A."/>
            <person name="Harkins R."/>
            <person name="Kim K."/>
            <person name="Kruchowski S.S."/>
            <person name="Strong C.M."/>
            <person name="Grewal N."/>
            <person name="Goyea E."/>
            <person name="Hou S."/>
            <person name="Levy A."/>
            <person name="Martinka S."/>
            <person name="Mead K."/>
            <person name="McLellan M.D."/>
            <person name="Meyer R."/>
            <person name="Randall-Maher J."/>
            <person name="Tomlinson C."/>
            <person name="Dauphin-Kohlberg S."/>
            <person name="Kozlowicz-Reilly A."/>
            <person name="Shah N."/>
            <person name="Swearengen-Shahid S."/>
            <person name="Snider J."/>
            <person name="Strong J.T."/>
            <person name="Thompson J."/>
            <person name="Yoakum M."/>
            <person name="Leonard S."/>
            <person name="Pearman C."/>
            <person name="Trani L."/>
            <person name="Radionenko M."/>
            <person name="Waligorski J.E."/>
            <person name="Wang C."/>
            <person name="Rock S.M."/>
            <person name="Tin-Wollam A.-M."/>
            <person name="Maupin R."/>
            <person name="Latreille P."/>
            <person name="Wendl M.C."/>
            <person name="Yang S.-P."/>
            <person name="Pohl C."/>
            <person name="Wallis J.W."/>
            <person name="Spieth J."/>
            <person name="Bieri T.A."/>
            <person name="Berkowicz N."/>
            <person name="Nelson J.O."/>
            <person name="Osborne J."/>
            <person name="Ding L."/>
            <person name="Meyer R."/>
            <person name="Sabo A."/>
            <person name="Shotland Y."/>
            <person name="Sinha P."/>
            <person name="Wohldmann P.E."/>
            <person name="Cook L.L."/>
            <person name="Hickenbotham M.T."/>
            <person name="Eldred J."/>
            <person name="Williams D."/>
            <person name="Jones T.A."/>
            <person name="She X."/>
            <person name="Ciccarelli F.D."/>
            <person name="Izaurralde E."/>
            <person name="Taylor J."/>
            <person name="Schmutz J."/>
            <person name="Myers R.M."/>
            <person name="Cox D.R."/>
            <person name="Huang X."/>
            <person name="McPherson J.D."/>
            <person name="Mardis E.R."/>
            <person name="Clifton S.W."/>
            <person name="Warren W.C."/>
            <person name="Chinwalla A.T."/>
            <person name="Eddy S.R."/>
            <person name="Marra M.A."/>
            <person name="Ovcharenko I."/>
            <person name="Furey T.S."/>
            <person name="Miller W."/>
            <person name="Eichler E.E."/>
            <person name="Bork P."/>
            <person name="Suyama M."/>
            <person name="Torrents D."/>
            <person name="Waterston R.H."/>
            <person name="Wilson R.K."/>
        </authorList>
    </citation>
    <scope>NUCLEOTIDE SEQUENCE [LARGE SCALE GENOMIC DNA]</scope>
</reference>
<reference key="3">
    <citation type="journal article" date="2004" name="Nat. Genet.">
        <title>Complete sequencing and characterization of 21,243 full-length human cDNAs.</title>
        <authorList>
            <person name="Ota T."/>
            <person name="Suzuki Y."/>
            <person name="Nishikawa T."/>
            <person name="Otsuki T."/>
            <person name="Sugiyama T."/>
            <person name="Irie R."/>
            <person name="Wakamatsu A."/>
            <person name="Hayashi K."/>
            <person name="Sato H."/>
            <person name="Nagai K."/>
            <person name="Kimura K."/>
            <person name="Makita H."/>
            <person name="Sekine M."/>
            <person name="Obayashi M."/>
            <person name="Nishi T."/>
            <person name="Shibahara T."/>
            <person name="Tanaka T."/>
            <person name="Ishii S."/>
            <person name="Yamamoto J."/>
            <person name="Saito K."/>
            <person name="Kawai Y."/>
            <person name="Isono Y."/>
            <person name="Nakamura Y."/>
            <person name="Nagahari K."/>
            <person name="Murakami K."/>
            <person name="Yasuda T."/>
            <person name="Iwayanagi T."/>
            <person name="Wagatsuma M."/>
            <person name="Shiratori A."/>
            <person name="Sudo H."/>
            <person name="Hosoiri T."/>
            <person name="Kaku Y."/>
            <person name="Kodaira H."/>
            <person name="Kondo H."/>
            <person name="Sugawara M."/>
            <person name="Takahashi M."/>
            <person name="Kanda K."/>
            <person name="Yokoi T."/>
            <person name="Furuya T."/>
            <person name="Kikkawa E."/>
            <person name="Omura Y."/>
            <person name="Abe K."/>
            <person name="Kamihara K."/>
            <person name="Katsuta N."/>
            <person name="Sato K."/>
            <person name="Tanikawa M."/>
            <person name="Yamazaki M."/>
            <person name="Ninomiya K."/>
            <person name="Ishibashi T."/>
            <person name="Yamashita H."/>
            <person name="Murakawa K."/>
            <person name="Fujimori K."/>
            <person name="Tanai H."/>
            <person name="Kimata M."/>
            <person name="Watanabe M."/>
            <person name="Hiraoka S."/>
            <person name="Chiba Y."/>
            <person name="Ishida S."/>
            <person name="Ono Y."/>
            <person name="Takiguchi S."/>
            <person name="Watanabe S."/>
            <person name="Yosida M."/>
            <person name="Hotuta T."/>
            <person name="Kusano J."/>
            <person name="Kanehori K."/>
            <person name="Takahashi-Fujii A."/>
            <person name="Hara H."/>
            <person name="Tanase T.-O."/>
            <person name="Nomura Y."/>
            <person name="Togiya S."/>
            <person name="Komai F."/>
            <person name="Hara R."/>
            <person name="Takeuchi K."/>
            <person name="Arita M."/>
            <person name="Imose N."/>
            <person name="Musashino K."/>
            <person name="Yuuki H."/>
            <person name="Oshima A."/>
            <person name="Sasaki N."/>
            <person name="Aotsuka S."/>
            <person name="Yoshikawa Y."/>
            <person name="Matsunawa H."/>
            <person name="Ichihara T."/>
            <person name="Shiohata N."/>
            <person name="Sano S."/>
            <person name="Moriya S."/>
            <person name="Momiyama H."/>
            <person name="Satoh N."/>
            <person name="Takami S."/>
            <person name="Terashima Y."/>
            <person name="Suzuki O."/>
            <person name="Nakagawa S."/>
            <person name="Senoh A."/>
            <person name="Mizoguchi H."/>
            <person name="Goto Y."/>
            <person name="Shimizu F."/>
            <person name="Wakebe H."/>
            <person name="Hishigaki H."/>
            <person name="Watanabe T."/>
            <person name="Sugiyama A."/>
            <person name="Takemoto M."/>
            <person name="Kawakami B."/>
            <person name="Yamazaki M."/>
            <person name="Watanabe K."/>
            <person name="Kumagai A."/>
            <person name="Itakura S."/>
            <person name="Fukuzumi Y."/>
            <person name="Fujimori Y."/>
            <person name="Komiyama M."/>
            <person name="Tashiro H."/>
            <person name="Tanigami A."/>
            <person name="Fujiwara T."/>
            <person name="Ono T."/>
            <person name="Yamada K."/>
            <person name="Fujii Y."/>
            <person name="Ozaki K."/>
            <person name="Hirao M."/>
            <person name="Ohmori Y."/>
            <person name="Kawabata A."/>
            <person name="Hikiji T."/>
            <person name="Kobatake N."/>
            <person name="Inagaki H."/>
            <person name="Ikema Y."/>
            <person name="Okamoto S."/>
            <person name="Okitani R."/>
            <person name="Kawakami T."/>
            <person name="Noguchi S."/>
            <person name="Itoh T."/>
            <person name="Shigeta K."/>
            <person name="Senba T."/>
            <person name="Matsumura K."/>
            <person name="Nakajima Y."/>
            <person name="Mizuno T."/>
            <person name="Morinaga M."/>
            <person name="Sasaki M."/>
            <person name="Togashi T."/>
            <person name="Oyama M."/>
            <person name="Hata H."/>
            <person name="Watanabe M."/>
            <person name="Komatsu T."/>
            <person name="Mizushima-Sugano J."/>
            <person name="Satoh T."/>
            <person name="Shirai Y."/>
            <person name="Takahashi Y."/>
            <person name="Nakagawa K."/>
            <person name="Okumura K."/>
            <person name="Nagase T."/>
            <person name="Nomura N."/>
            <person name="Kikuchi H."/>
            <person name="Masuho Y."/>
            <person name="Yamashita R."/>
            <person name="Nakai K."/>
            <person name="Yada T."/>
            <person name="Nakamura Y."/>
            <person name="Ohara O."/>
            <person name="Isogai T."/>
            <person name="Sugano S."/>
        </authorList>
    </citation>
    <scope>NUCLEOTIDE SEQUENCE [LARGE SCALE MRNA] OF 301-2002 (ISOFORM 2)</scope>
    <source>
        <tissue>Adipose tissue</tissue>
        <tissue>Placenta</tissue>
    </source>
</reference>
<reference key="4">
    <citation type="journal article" date="2003" name="Cancer Lett.">
        <title>Neuroblastoma oligo-capping cDNA project: toward the understanding of the genesis and biology of neuroblastoma.</title>
        <authorList>
            <person name="Ohira M."/>
            <person name="Morohashi A."/>
            <person name="Nakamura Y."/>
            <person name="Isogai E."/>
            <person name="Furuya K."/>
            <person name="Hamano S."/>
            <person name="Machida T."/>
            <person name="Aoyama M."/>
            <person name="Fukumura M."/>
            <person name="Miyazaki K."/>
            <person name="Suzuki Y."/>
            <person name="Sugano S."/>
            <person name="Hirato J."/>
            <person name="Nakagawara A."/>
        </authorList>
    </citation>
    <scope>NUCLEOTIDE SEQUENCE [LARGE SCALE MRNA] OF 791-2002 (ISOFORM 3)</scope>
    <source>
        <tissue>Neuroblastoma</tissue>
    </source>
</reference>
<reference key="5">
    <citation type="journal article" date="2004" name="Genome Res.">
        <title>The status, quality, and expansion of the NIH full-length cDNA project: the Mammalian Gene Collection (MGC).</title>
        <authorList>
            <consortium name="The MGC Project Team"/>
        </authorList>
    </citation>
    <scope>NUCLEOTIDE SEQUENCE [LARGE SCALE MRNA] OF 1198-2002 (ISOFORM 1)</scope>
    <scope>VARIANT VAL-1762</scope>
</reference>
<reference key="6">
    <citation type="journal article" date="2000" name="DNA Res.">
        <title>Prediction of the coding sequences of unidentified human genes. XVIII. The complete sequences of 100 new cDNA clones from brain which code for large proteins in vitro.</title>
        <authorList>
            <person name="Nagase T."/>
            <person name="Kikuno R."/>
            <person name="Nakayama M."/>
            <person name="Hirosawa M."/>
            <person name="Ohara O."/>
        </authorList>
    </citation>
    <scope>NUCLEOTIDE SEQUENCE [LARGE SCALE MRNA] OF 1319-2002 (ISOFORM 1)</scope>
    <source>
        <tissue>Brain</tissue>
    </source>
</reference>
<reference key="7">
    <citation type="journal article" date="2003" name="Leukemia">
        <title>TET1, a member of a novel protein family, is fused to MLL in acute myeloid leukemia containing the t(10;11)(q22;q23).</title>
        <authorList>
            <person name="Lorsbach R.B."/>
            <person name="Moore J."/>
            <person name="Mathew S."/>
            <person name="Raimondi S.C."/>
            <person name="Mukatira S.T."/>
            <person name="Downing J.R."/>
        </authorList>
    </citation>
    <scope>IDENTIFICATION</scope>
    <scope>TISSUE SPECIFICITY</scope>
</reference>
<reference key="8">
    <citation type="journal article" date="2008" name="Proc. Natl. Acad. Sci. U.S.A.">
        <title>A quantitative atlas of mitotic phosphorylation.</title>
        <authorList>
            <person name="Dephoure N."/>
            <person name="Zhou C."/>
            <person name="Villen J."/>
            <person name="Beausoleil S.A."/>
            <person name="Bakalarski C.E."/>
            <person name="Elledge S.J."/>
            <person name="Gygi S.P."/>
        </authorList>
    </citation>
    <scope>IDENTIFICATION BY MASS SPECTROMETRY [LARGE SCALE ANALYSIS]</scope>
    <source>
        <tissue>Cervix carcinoma</tissue>
    </source>
</reference>
<reference key="9">
    <citation type="journal article" date="2009" name="Anal. Chem.">
        <title>Lys-N and trypsin cover complementary parts of the phosphoproteome in a refined SCX-based approach.</title>
        <authorList>
            <person name="Gauci S."/>
            <person name="Helbig A.O."/>
            <person name="Slijper M."/>
            <person name="Krijgsveld J."/>
            <person name="Heck A.J."/>
            <person name="Mohammed S."/>
        </authorList>
    </citation>
    <scope>IDENTIFICATION BY MASS SPECTROMETRY [LARGE SCALE ANALYSIS]</scope>
</reference>
<reference key="10">
    <citation type="journal article" date="2013" name="Science">
        <title>CRL4 complex regulates mammalian oocyte survival and reprogramming by activation of TET proteins.</title>
        <authorList>
            <person name="Yu C."/>
            <person name="Zhang Y.L."/>
            <person name="Pan W.W."/>
            <person name="Li X.M."/>
            <person name="Wang Z.W."/>
            <person name="Ge Z.J."/>
            <person name="Zhou J.J."/>
            <person name="Cang Y."/>
            <person name="Tong C."/>
            <person name="Sun Q.Y."/>
            <person name="Fan H.Y."/>
        </authorList>
    </citation>
    <scope>INTERACTION WITH DCAF1</scope>
</reference>
<reference key="11">
    <citation type="journal article" date="2015" name="Mol. Cell">
        <title>CRL4(VprBP) E3 ligase promotes monoubiquitylation and chromatin binding of TET dioxygenases.</title>
        <authorList>
            <person name="Nakagawa T."/>
            <person name="Lv L."/>
            <person name="Nakagawa M."/>
            <person name="Yu Y."/>
            <person name="Yu C."/>
            <person name="D'Alessio A.C."/>
            <person name="Nakayama K."/>
            <person name="Fan H.Y."/>
            <person name="Chen X."/>
            <person name="Xiong Y."/>
        </authorList>
    </citation>
    <scope>INTERACTION WITH DCAF1</scope>
    <scope>MONOUBIQITINATION AT LYS-1299</scope>
    <scope>SUBCELLULAR LOCATION</scope>
    <scope>CHARACTERIZATION OF VARIANTS LEU-1287; ARG-1291; ASN-1299; GLU-1299; GLY-1302 AND GLY-1318</scope>
    <scope>MUTAGENESIS OF SER-1292; CYS-1298 AND PHE-1300</scope>
</reference>
<reference key="12">
    <citation type="journal article" date="2009" name="Blood">
        <title>Genetic characterization of TET1, TET2, and TET3 alterations in myeloid malignancies.</title>
        <authorList>
            <person name="Abdel-Wahab O."/>
            <person name="Mullally A."/>
            <person name="Hedvat C."/>
            <person name="Garcia-Manero G."/>
            <person name="Patel J."/>
            <person name="Wadleigh M."/>
            <person name="Malinge S."/>
            <person name="Yao J."/>
            <person name="Kilpivaara O."/>
            <person name="Bhat R."/>
            <person name="Huberman K."/>
            <person name="Thomas S."/>
            <person name="Dolgalev I."/>
            <person name="Heguy A."/>
            <person name="Paietta E."/>
            <person name="Le Beau M.M."/>
            <person name="Beran M."/>
            <person name="Tallman M.S."/>
            <person name="Ebert B.L."/>
            <person name="Kantarjian H.M."/>
            <person name="Stone R.M."/>
            <person name="Gilliland D.G."/>
            <person name="Crispino J.D."/>
            <person name="Levine R.L."/>
        </authorList>
    </citation>
    <scope>INVOLVEMENT IN MYELOID MALIGNANCIES</scope>
    <scope>VARIANTS PHE-34; ASN-145; HIS-174; SER-312; PHE-460; GLY-666; HIS-867; SER-941; VAL-1073; PRO-1084; TYR-1135; CYS-1204; TRP-1214; VAL-1242; SER-1245; CYS-1261; HIS-1261; PHE-1417; LEU-1718; SER-1723; ASP-1757; ARG-1811; LEU-1828; THR-1873; ARG-1881; ALA-1900; VAL-1919; HIS-1926; SER-1941; HIS-1966; MET-1974 AND LYS-2000</scope>
</reference>
<reference key="13">
    <citation type="journal article" date="2009" name="Blood">
        <title>Loss of heterozygosity 4q24 and TET2 mutations associated with myelodysplastic/myeloproliferative neoplasms.</title>
        <authorList>
            <person name="Jankowska A.M."/>
            <person name="Szpurka H."/>
            <person name="Tiu R.V."/>
            <person name="Makishima H."/>
            <person name="Afable M."/>
            <person name="Huh J."/>
            <person name="O'Keefe C.L."/>
            <person name="Ganetzky R."/>
            <person name="McDevitt M.A."/>
            <person name="Maciejewski J.P."/>
        </authorList>
    </citation>
    <scope>INVOLVEMENT IN MDS</scope>
    <scope>INVOLVEMENT IN MYELOPROLIFERATIVE DISORDERS</scope>
    <scope>VARIANTS THR-308; LEU-399; THR-817; HIS-867; PRO-1084; THR-1167; LEU-1287; ASN-1299; GLY-1302; GLY-1318; LEU-1718; THR-1873 AND ASP-1913</scope>
</reference>
<reference key="14">
    <citation type="journal article" date="2009" name="Leukemia">
        <title>Frequent TET2 mutations in systemic mastocytosis: clinical, KITD816V and FIP1L1-PDGFRA correlates.</title>
        <authorList>
            <person name="Tefferi A."/>
            <person name="Levine R.L."/>
            <person name="Lim K.H."/>
            <person name="Abdel-Wahab O."/>
            <person name="Lasho T.L."/>
            <person name="Patel J."/>
            <person name="Finke C.M."/>
            <person name="Mullally A."/>
            <person name="Li C.Y."/>
            <person name="Pardanani A."/>
            <person name="Gilliland D.G."/>
        </authorList>
    </citation>
    <scope>INVOLVEMENT IN SYSTEMIC MASTOCYTOSIS</scope>
    <scope>VARIANT ARG-1881</scope>
</reference>
<reference key="15">
    <citation type="journal article" date="2009" name="Leukemia">
        <title>TET2 mutations and their clinical correlates in polycythemia vera, essential thrombocythemia and myelofibrosis.</title>
        <authorList>
            <person name="Tefferi A."/>
            <person name="Pardanani A."/>
            <person name="Lim K.H."/>
            <person name="Abdel-Wahab O."/>
            <person name="Lasho T.L."/>
            <person name="Patel J."/>
            <person name="Gangat N."/>
            <person name="Finke C.M."/>
            <person name="Schwager S."/>
            <person name="Mullally A."/>
            <person name="Li C.-Y."/>
            <person name="Hanson C.A."/>
            <person name="Mesa R."/>
            <person name="Bernard O."/>
            <person name="Delhommeau F."/>
            <person name="Vainchenker W."/>
            <person name="Gilliland D.G."/>
            <person name="Levine R.L."/>
        </authorList>
    </citation>
    <scope>INVOLVEMENT IN MYELOPROLIFERATIVE DISORDERS</scope>
    <scope>VARIANTS ARG-1242 AND THR-1873</scope>
</reference>
<reference key="16">
    <citation type="journal article" date="2009" name="Nat. Genet.">
        <title>Acquired mutations in TET2 are common in myelodysplastic syndromes.</title>
        <authorList>
            <person name="Langemeijer S.M.C."/>
            <person name="Kuiper R.P."/>
            <person name="Berends M."/>
            <person name="Knops R."/>
            <person name="Aslanyan M.G."/>
            <person name="Massop M."/>
            <person name="Stevens-Linders E."/>
            <person name="van Hoogen P."/>
            <person name="van Kessel A.G."/>
            <person name="Raymakers R.A.P."/>
            <person name="Kamping E.J."/>
            <person name="Verhoef G.E."/>
            <person name="Verburgh E."/>
            <person name="Hagemeijer A."/>
            <person name="Vandenberghe P."/>
            <person name="de Witte T."/>
            <person name="van der Reijden B.A."/>
            <person name="Jansen J.H."/>
        </authorList>
    </citation>
    <scope>INVOLVEMENT IN MDS</scope>
    <scope>FUNCTION</scope>
    <scope>TISSUE SPECIFICITY</scope>
    <scope>VARIANTS ARG-29; PHE-34; HIS-123; MET-218; ASP-355; LEU-363; ARG-429; HIS-867; ARG-924; ARG-949; PRO-1084; TRP-1214; LEU-1261; PHE-1285 DEL; ARG-1291; TRP-1396; ARG-1398; ILE-1701; TRP-1721; SER-1723; VAL-1762; ARG-1778; THR-1873; ARG-1875; GLN-1881; SER-1896; 1911-LYS--LEU-1916 DEL; ASP-1913 AND LEU-1962</scope>
</reference>
<reference key="17">
    <citation type="journal article" date="2009" name="Sci. Signal.">
        <title>Quantitative phosphoproteomic analysis of T cell receptor signaling reveals system-wide modulation of protein-protein interactions.</title>
        <authorList>
            <person name="Mayya V."/>
            <person name="Lundgren D.H."/>
            <person name="Hwang S.-I."/>
            <person name="Rezaul K."/>
            <person name="Wu L."/>
            <person name="Eng J.K."/>
            <person name="Rodionov V."/>
            <person name="Han D.K."/>
        </authorList>
    </citation>
    <scope>PHOSPHORYLATION [LARGE SCALE ANALYSIS] AT SER-99 AND SER-1107</scope>
    <scope>IDENTIFICATION BY MASS SPECTROMETRY [LARGE SCALE ANALYSIS]</scope>
    <source>
        <tissue>Leukemic T-cell</tissue>
    </source>
</reference>
<reference key="18">
    <citation type="journal article" date="2010" name="Nature">
        <title>Impaired hydroxylation of 5-methylcytosine in myeloid cancers with mutant TET2.</title>
        <authorList>
            <person name="Ko M."/>
            <person name="Huang Y."/>
            <person name="Jankowska A.M."/>
            <person name="Pape U.J."/>
            <person name="Tahiliani M."/>
            <person name="Bandukwala H.S."/>
            <person name="An J."/>
            <person name="Lamperti E.D."/>
            <person name="Koh K.P."/>
            <person name="Ganetzky R."/>
            <person name="Liu X.S."/>
            <person name="Aravind L."/>
            <person name="Agarwal S."/>
            <person name="Maciejewski J.P."/>
            <person name="Rao A."/>
        </authorList>
    </citation>
    <scope>FUNCTION</scope>
    <scope>INVOLVEMENT IN MDS</scope>
    <scope>INVOLVEMENT IN MYELOPROLIFERATIVE DISORDERS</scope>
</reference>
<reference key="19">
    <citation type="journal article" date="2011" name="Science">
        <title>Tet-mediated formation of 5-carboxylcytosine and its excision by TDG in mammalian DNA.</title>
        <authorList>
            <person name="He Y.F."/>
            <person name="Li B.Z."/>
            <person name="Li Z."/>
            <person name="Liu P."/>
            <person name="Wang Y."/>
            <person name="Tang Q."/>
            <person name="Ding J."/>
            <person name="Jia Y."/>
            <person name="Chen Z."/>
            <person name="Li L."/>
            <person name="Sun Y."/>
            <person name="Li X."/>
            <person name="Dai Q."/>
            <person name="Song C.X."/>
            <person name="Zhang K."/>
            <person name="He C."/>
            <person name="Xu G.L."/>
        </authorList>
    </citation>
    <scope>FUNCTION</scope>
</reference>
<reference key="20">
    <citation type="journal article" date="2013" name="EMBO J.">
        <title>TET2 and TET3 regulate GlcNAcylation and H3K4 methylation through OGT and SET1/COMPASS.</title>
        <authorList>
            <person name="Deplus R."/>
            <person name="Delatte B."/>
            <person name="Schwinn M.K."/>
            <person name="Defrance M."/>
            <person name="Mendez J."/>
            <person name="Murphy N."/>
            <person name="Dawson M.A."/>
            <person name="Volkmar M."/>
            <person name="Putmans P."/>
            <person name="Calonne E."/>
            <person name="Shih A.H."/>
            <person name="Levine R.L."/>
            <person name="Bernard O."/>
            <person name="Mercher T."/>
            <person name="Solary E."/>
            <person name="Urh M."/>
            <person name="Daniels D.L."/>
            <person name="Fuks F."/>
        </authorList>
    </citation>
    <scope>FUNCTION</scope>
    <scope>INTERACTION WITH HCFC1 AND OGT</scope>
</reference>
<reference key="21">
    <citation type="journal article" date="2013" name="J. Proteome Res.">
        <title>Toward a comprehensive characterization of a human cancer cell phosphoproteome.</title>
        <authorList>
            <person name="Zhou H."/>
            <person name="Di Palma S."/>
            <person name="Preisinger C."/>
            <person name="Peng M."/>
            <person name="Polat A.N."/>
            <person name="Heck A.J."/>
            <person name="Mohammed S."/>
        </authorList>
    </citation>
    <scope>PHOSPHORYLATION [LARGE SCALE ANALYSIS] AT SER-75; SER-99; SER-1107 AND SER-1109</scope>
    <scope>IDENTIFICATION BY MASS SPECTROMETRY [LARGE SCALE ANALYSIS]</scope>
    <source>
        <tissue>Cervix carcinoma</tissue>
        <tissue>Erythroleukemia</tissue>
    </source>
</reference>
<reference key="22">
    <citation type="journal article" date="2013" name="Nature">
        <title>TET2 promotes histone O-GlcNAcylation during gene transcription.</title>
        <authorList>
            <person name="Chen Q."/>
            <person name="Chen Y."/>
            <person name="Bian C."/>
            <person name="Fujiki R."/>
            <person name="Yu X."/>
        </authorList>
    </citation>
    <scope>FUNCTION</scope>
    <scope>INTERACTION WITH OGT</scope>
    <scope>MUTAGENESIS OF HIS-1382 AND ASP-1384</scope>
</reference>
<reference key="23">
    <citation type="journal article" date="2014" name="Mol. Cell. Proteomics">
        <title>Immunoaffinity enrichment and mass spectrometry analysis of protein methylation.</title>
        <authorList>
            <person name="Guo A."/>
            <person name="Gu H."/>
            <person name="Zhou J."/>
            <person name="Mulhern D."/>
            <person name="Wang Y."/>
            <person name="Lee K.A."/>
            <person name="Yang V."/>
            <person name="Aguiar M."/>
            <person name="Kornhauser J."/>
            <person name="Jia X."/>
            <person name="Ren J."/>
            <person name="Beausoleil S.A."/>
            <person name="Silva J.C."/>
            <person name="Vemulapalli V."/>
            <person name="Bedford M.T."/>
            <person name="Comb M.J."/>
        </authorList>
    </citation>
    <scope>METHYLATION [LARGE SCALE ANALYSIS] AT ARG-1682</scope>
    <scope>IDENTIFICATION BY MASS SPECTROMETRY [LARGE SCALE ANALYSIS]</scope>
    <source>
        <tissue>Colon carcinoma</tissue>
    </source>
</reference>
<reference key="24">
    <citation type="journal article" date="2022" name="Life. Sci Alliance">
        <title>PROSER1 mediates TET2 O-GlcNAcylation to regulate DNA demethylation on UTX-dependent enhancers and CpG islands.</title>
        <authorList>
            <person name="Wang X."/>
            <person name="Rosikiewicz W."/>
            <person name="Sedkov Y."/>
            <person name="Martinez T."/>
            <person name="Hansen B.S."/>
            <person name="Schreiner P."/>
            <person name="Christensen J."/>
            <person name="Xu B."/>
            <person name="Pruett-Miller S.M."/>
            <person name="Helin K."/>
            <person name="Herz H.M."/>
        </authorList>
    </citation>
    <scope>INTERACTION WITH PROSER1</scope>
</reference>
<reference key="25">
    <citation type="journal article" date="2024" name="Nature">
        <title>Human HDAC6 senses valine abundancy to regulate DNA damage.</title>
        <authorList>
            <person name="Jin J."/>
            <person name="Meng T."/>
            <person name="Yu Y."/>
            <person name="Wu S."/>
            <person name="Jiao C.C."/>
            <person name="Song S."/>
            <person name="Li Y.X."/>
            <person name="Zhang Y."/>
            <person name="Zhao Y.Y."/>
            <person name="Li X."/>
            <person name="Wang Z."/>
            <person name="Liu Y.F."/>
            <person name="Huang R."/>
            <person name="Qin J."/>
            <person name="Chen Y."/>
            <person name="Cao H."/>
            <person name="Tan X."/>
            <person name="Ge X."/>
            <person name="Jiang C."/>
            <person name="Xue J."/>
            <person name="Yuan J."/>
            <person name="Wu D."/>
            <person name="Wu W."/>
            <person name="Jiang C.Z."/>
            <person name="Wang P."/>
        </authorList>
    </citation>
    <scope>ACETYLATION</scope>
    <scope>DEACETYLATION BY HDAC6</scope>
</reference>
<reference key="26">
    <citation type="journal article" date="2013" name="Cell">
        <title>Crystal structure of TET2-DNA complex: insight into TET-mediated 5mC oxidation.</title>
        <authorList>
            <person name="Hu L."/>
            <person name="Li Z."/>
            <person name="Cheng J."/>
            <person name="Rao Q."/>
            <person name="Gong W."/>
            <person name="Liu M."/>
            <person name="Shi Y.G."/>
            <person name="Zhu J."/>
            <person name="Wang P."/>
            <person name="Xu Y."/>
        </authorList>
    </citation>
    <scope>X-RAY CRYSTALLOGRAPHY (2.03 ANGSTROMS) OF 1129-1480 AND 1844-1936 IN COMPLEX WITH DNA; IRON; N-OXALYOLGLYCINE AND ZINC</scope>
    <scope>CATALYTIC ACTIVITY</scope>
    <scope>FUNCTION</scope>
    <scope>CHARACTERIZATION OF VARIANTS ARG-1291; GLU-1299; MET-1896 AND PHE-1898</scope>
    <scope>MUTAGENESIS OF ARG-1261; ARG-1262; SER-1290; 1291-TRP--ASN-1296; 1293-MET-TYR-1294; TYR-1295; SER-1303; HIS-1382; ASP-1384; ASN-1387; TYR-1902 AND HIS-1904</scope>
</reference>
<reference key="27">
    <citation type="journal article" date="2009" name="N. Engl. J. Med.">
        <title>Mutation in TET2 in myeloid cancers.</title>
        <authorList>
            <person name="Delhommeau F."/>
            <person name="Dupont S."/>
            <person name="Della Valle V."/>
            <person name="James C."/>
            <person name="Trannoy S."/>
            <person name="Masse A."/>
            <person name="Kosmider O."/>
            <person name="Le Couedic J.-P."/>
            <person name="Robert F."/>
            <person name="Alberdi A."/>
            <person name="Lecluse Y."/>
            <person name="Plo I."/>
            <person name="Dreyfus F.J."/>
            <person name="Marzac C."/>
            <person name="Casadevall N."/>
            <person name="Lacombe C."/>
            <person name="Romana S.P."/>
            <person name="Dessen P."/>
            <person name="Soulier J."/>
            <person name="Viguie F."/>
            <person name="Fontenay M."/>
            <person name="Vainchenker W."/>
            <person name="Bernard O.A."/>
        </authorList>
    </citation>
    <scope>VARIANTS VAL-1175; 1237-PRO--SER-1239 DEL; GLU-1299; GLY-1302; TRP-1869; PRO-1872; THR-1873; MET-1896 AND PHE-1898</scope>
</reference>
<reference key="28">
    <citation type="journal article" date="2020" name="Blood">
        <title>Germline TET2 loss of function causes childhood immunodeficiency and lymphoma.</title>
        <authorList>
            <person name="Stremenova Spegarova J."/>
            <person name="Lawless D."/>
            <person name="Mohamad S.M.B."/>
            <person name="Engelhardt K.R."/>
            <person name="Doody G."/>
            <person name="Shrimpton J."/>
            <person name="Rensing-Ehl A."/>
            <person name="Ehl S."/>
            <person name="Rieux-Laucat F."/>
            <person name="Cargo C."/>
            <person name="Griffin H."/>
            <person name="Mikulasova A."/>
            <person name="Acres M."/>
            <person name="Morgan N.V."/>
            <person name="Poulter J.A."/>
            <person name="Sheridan E.G."/>
            <person name="Chetcuti P."/>
            <person name="O'Riordan S."/>
            <person name="Anwar R."/>
            <person name="Carter C.R."/>
            <person name="Przyborski S."/>
            <person name="Windebank K."/>
            <person name="Cant A.J."/>
            <person name="Lako M."/>
            <person name="Bacon C.M."/>
            <person name="Savic S."/>
            <person name="Hambleton S."/>
        </authorList>
    </citation>
    <scope>INVOLVEMENT IN IMD75</scope>
    <scope>VARIANTS IMD75 ARG-1382 AND 1632-GLN--ILE-2002 DEL</scope>
    <scope>CHARACTERIZATION OF VARIANTS IMD75 ARG-1382 AND 1632-GLN--ILE-2002 DEL</scope>
    <scope>FUNCTION</scope>
    <scope>CATALYTIC ACTIVITY</scope>
</reference>
<organism>
    <name type="scientific">Homo sapiens</name>
    <name type="common">Human</name>
    <dbReference type="NCBI Taxonomy" id="9606"/>
    <lineage>
        <taxon>Eukaryota</taxon>
        <taxon>Metazoa</taxon>
        <taxon>Chordata</taxon>
        <taxon>Craniata</taxon>
        <taxon>Vertebrata</taxon>
        <taxon>Euteleostomi</taxon>
        <taxon>Mammalia</taxon>
        <taxon>Eutheria</taxon>
        <taxon>Euarchontoglires</taxon>
        <taxon>Primates</taxon>
        <taxon>Haplorrhini</taxon>
        <taxon>Catarrhini</taxon>
        <taxon>Hominidae</taxon>
        <taxon>Homo</taxon>
    </lineage>
</organism>
<proteinExistence type="evidence at protein level"/>
<accession>Q6N021</accession>
<accession>B5MDU0</accession>
<accession>Q2TB88</accession>
<accession>Q3LIB8</accession>
<accession>Q96JX5</accession>
<accession>Q9HCM6</accession>
<accession>Q9NXW0</accession>
<keyword id="KW-0002">3D-structure</keyword>
<keyword id="KW-0007">Acetylation</keyword>
<keyword id="KW-0025">Alternative splicing</keyword>
<keyword id="KW-0131">Cell cycle</keyword>
<keyword id="KW-0156">Chromatin regulator</keyword>
<keyword id="KW-0158">Chromosome</keyword>
<keyword id="KW-0223">Dioxygenase</keyword>
<keyword id="KW-0225">Disease variant</keyword>
<keyword id="KW-0238">DNA-binding</keyword>
<keyword id="KW-0325">Glycoprotein</keyword>
<keyword id="KW-0408">Iron</keyword>
<keyword id="KW-1017">Isopeptide bond</keyword>
<keyword id="KW-0479">Metal-binding</keyword>
<keyword id="KW-0488">Methylation</keyword>
<keyword id="KW-0539">Nucleus</keyword>
<keyword id="KW-0560">Oxidoreductase</keyword>
<keyword id="KW-0597">Phosphoprotein</keyword>
<keyword id="KW-1267">Proteomics identification</keyword>
<keyword id="KW-1185">Reference proteome</keyword>
<keyword id="KW-0043">Tumor suppressor</keyword>
<keyword id="KW-0832">Ubl conjugation</keyword>
<keyword id="KW-0862">Zinc</keyword>
<sequence>MEQDRTNHVEGNRLSPFLIPSPPICQTEPLATKLQNGSPLPERAHPEVNGDTKWHSFKSYYGIPCMKGSQNSRVSPDFTQESRGYSKCLQNGGIKRTVSEPSLSGLLQIKKLKQDQKANGERRNFGVSQERNPGESSQPNVSDLSDKKESVSSVAQENAVKDFTSFSTHNCSGPENPELQILNEQEGKSANYHDKNIVLLKNKAVLMPNGATVSASSVEHTHGELLEKTLSQYYPDCVSIAVQKTTSHINAINSQATNELSCEITHPSHTSGQINSAQTSNSELPPKPAAVVSEACDADDADNASKLAAMLNTCSFQKPEQLQQQKSVFEICPSPAENNIQGTTKLASGEEFCSGSSSNLQAPGGSSERYLKQNEMNGAYFKQSSVFTKDSFSATTTPPPPSQLLLSPPPPLPQVPQLPSEGKSTLNGGVLEEHHHYPNQSNTTLLREVKIEGKPEAPPSQSPNPSTHVCSPSPMLSERPQNNCVNRNDIQTAGTMTVPLCSEKTRPMSEHLKHNPPIFGSSGELQDNCQQLMRNKEQEILKGRDKEQTRDLVPPTQHYLKPGWIELKAPRFHQAESHLKRNEASLPSILQYQPNLSNQMTSKQYTGNSNMPGGLPRQAYTQKTTQLEHKSQMYQVEMNQGQSQGTVDQHLQFQKPSHQVHFSKTDHLPKAHVQSLCGTRFHFQQRADSQTEKLMSPVLKQHLNQQASETEPFSNSHLLQHKPHKQAAQTQPSQSSHLPQNQQQQQKLQIKNKEEILQTFPHPQSNNDQQREGSFFGQTKVEECFHGENQYSKSSEFETHNVQMGLEEVQNINRRNSPYSQTMKSSACKIQVSCSNNTHLVSENKEQTTHPELFAGNKTQNLHHMQYFPNNVIPKQDLLHRCFQEQEQKSQQASVLQGYKNRNQDMSGQQAAQLAQQRYLIHNHANVFPVPDQGGSHTQTPPQKDTQKHAALRWHLLQKQEQQQTQQPQTESCHSQMHRPIKVEPGCKPHACMHTAPPENKTWKKVTKQENPPASCDNVQQKSIIETMEQHLKQFHAKSLFDHKALTLKSQKQVKVEMSGPVTVLTRQTTAAELDSHTPALEQQTTSSEKTPTKRTAASVLNNFIESPSKLLDTPIKNLLDTPVKTQYDFPSCRCVEQIIEKDEGPFYTHLGAGPNVAAIREIMEERFGQKGKAIRIERVIYTGKEGKSSQGCPIAKWVVRRSSSEEKLLCLVRERAGHTCEAAVIVILILVWEGIPLSLADKLYSELTETLRKYGTLTNRRCALNEERTCACQGLDPETCGASFSFGCSWSMYYNGCKFARSKIPRKFKLLGDDPKEEEKLESHLQNLSTLMAPTYKKLAPDAYNNQIEYEHRAPECRLGLKEGRPFSGVTACLDFCAHAHRDLHNMQNGSTLVCTLTREDNREFGGKPEDEQLHVLPLYKVSDVDEFGSVEAQEEKKRSGAIQVLSSFRRKVRMLAEPVKTCRQRKLEAKKAAAEKLSSLENSSNKNEKEKSAPSRTKQTENASQAKQLAELLRLSGPVMQQSQQPQPLQKQPPQPQQQQRPQQQQPHHPQTESVNSYSASGSTNPYMRRPNPVSPYPNSSHTSDIYGSTSPMNFYSTSSQAAGSYLNSSNPMNPYPGLLNQNTQYPSYQCNGNLSVDNCSPYLGSYSPQSQPMDLYRYPSQDPLSKLSLPPIHTLYQPRFGNSQSFTSKYLGYGNQNMQGDGFSSCTIRPNVHHVGKLPPYPTHEMDGHFMGATSRLPPNLSNPNMDYKNGEHHSPSHIIHNYSAAPGMFNSSLHALHLQNKENDMLSHTANGLSKMLPALNHDRTACVQGGLHKLSDANGQEKQPLALVQGVASGAEDNDEVWSDSEQSFLDPDIGGVAVAPTHGSILIECAKRELHATTPLKNPNRNHPTRISLVFYQHKSMNEPKHGLALWEAKMAEKAREKEEECEKYGPDYVPQKSHGKKVKREPAEPHETSEPTYLRFIKSLAERTMSVTTDSTVTTSPYAFTRVTGPYNRYI</sequence>